<keyword id="KW-0002">3D-structure</keyword>
<keyword id="KW-0007">Acetylation</keyword>
<keyword id="KW-0963">Cytoplasm</keyword>
<keyword id="KW-0225">Disease variant</keyword>
<keyword id="KW-0238">DNA-binding</keyword>
<keyword id="KW-1017">Isopeptide bond</keyword>
<keyword id="KW-0479">Metal-binding</keyword>
<keyword id="KW-0539">Nucleus</keyword>
<keyword id="KW-0597">Phosphoprotein</keyword>
<keyword id="KW-1267">Proteomics identification</keyword>
<keyword id="KW-1185">Reference proteome</keyword>
<keyword id="KW-0804">Transcription</keyword>
<keyword id="KW-0805">Transcription regulation</keyword>
<keyword id="KW-0832">Ubl conjugation</keyword>
<keyword id="KW-0862">Zinc</keyword>
<proteinExistence type="evidence at protein level"/>
<feature type="chain" id="PRO_0000090861" description="Mothers against decapentaplegic homolog 4">
    <location>
        <begin position="1"/>
        <end position="552"/>
    </location>
</feature>
<feature type="domain" description="MH1" evidence="4">
    <location>
        <begin position="18"/>
        <end position="142"/>
    </location>
</feature>
<feature type="domain" description="MH2" evidence="5">
    <location>
        <begin position="323"/>
        <end position="552"/>
    </location>
</feature>
<feature type="region of interest" description="Mediates interaction with ZBTB7A" evidence="33">
    <location>
        <begin position="1"/>
        <end position="322"/>
    </location>
</feature>
<feature type="region of interest" description="Required for interaction with TSC22D1" evidence="21">
    <location>
        <begin position="44"/>
        <end position="69"/>
    </location>
</feature>
<feature type="region of interest" description="Disordered" evidence="6">
    <location>
        <begin position="168"/>
        <end position="194"/>
    </location>
</feature>
<feature type="region of interest" description="Disordered" evidence="6">
    <location>
        <begin position="236"/>
        <end position="256"/>
    </location>
</feature>
<feature type="region of interest" description="SAD">
    <location>
        <begin position="275"/>
        <end position="320"/>
    </location>
</feature>
<feature type="compositionally biased region" description="Polar residues" evidence="6">
    <location>
        <begin position="170"/>
        <end position="194"/>
    </location>
</feature>
<feature type="compositionally biased region" description="Polar residues" evidence="6">
    <location>
        <begin position="245"/>
        <end position="256"/>
    </location>
</feature>
<feature type="binding site" evidence="1">
    <location>
        <position position="71"/>
    </location>
    <ligand>
        <name>Zn(2+)</name>
        <dbReference type="ChEBI" id="CHEBI:29105"/>
    </ligand>
</feature>
<feature type="binding site" evidence="1">
    <location>
        <position position="115"/>
    </location>
    <ligand>
        <name>Zn(2+)</name>
        <dbReference type="ChEBI" id="CHEBI:29105"/>
    </ligand>
</feature>
<feature type="binding site" evidence="1">
    <location>
        <position position="127"/>
    </location>
    <ligand>
        <name>Zn(2+)</name>
        <dbReference type="ChEBI" id="CHEBI:29105"/>
    </ligand>
</feature>
<feature type="binding site" evidence="1">
    <location>
        <position position="132"/>
    </location>
    <ligand>
        <name>Zn(2+)</name>
        <dbReference type="ChEBI" id="CHEBI:29105"/>
    </ligand>
</feature>
<feature type="site" description="Necessary for heterotrimerization">
    <location>
        <position position="515"/>
    </location>
</feature>
<feature type="modified residue" description="N6-acetyllysine" evidence="41">
    <location>
        <position position="37"/>
    </location>
</feature>
<feature type="modified residue" description="N6-acetyllysine" evidence="41">
    <location>
        <position position="428"/>
    </location>
</feature>
<feature type="modified residue" description="N6-acetyllysine" evidence="41">
    <location>
        <position position="507"/>
    </location>
</feature>
<feature type="cross-link" description="Glycyl lysine isopeptide (Lys-Gly) (interchain with G-Cter in SUMO2)" evidence="42 43 44">
    <location>
        <position position="113"/>
    </location>
</feature>
<feature type="cross-link" description="Glycyl lysine isopeptide (Lys-Gly) (interchain with G-Cter in ubiquitin)" evidence="27">
    <location>
        <position position="519"/>
    </location>
</feature>
<feature type="sequence variant" id="VAR_066870" description="Rare variant; found in a patient with pulmonary hypertension; uncertain significance; dbSNP:rs281875323." evidence="28">
    <original>N</original>
    <variation>S</variation>
    <location>
        <position position="13"/>
    </location>
</feature>
<feature type="sequence variant" id="VAR_036475" description="In a colorectal cancer sample; somatic mutation; dbSNP:rs1555685186." evidence="23">
    <original>P</original>
    <variation>S</variation>
    <location>
        <position position="130"/>
    </location>
</feature>
<feature type="sequence variant" id="VAR_022833" description="In JPS; dbSNP:rs281875324." evidence="12">
    <original>E</original>
    <variation>G</variation>
    <location>
        <position position="330"/>
    </location>
</feature>
<feature type="sequence variant" id="VAR_036476" description="In a colorectal cancer sample; somatic mutation; dbSNP:rs1057519739." evidence="23">
    <original>D</original>
    <variation>N</variation>
    <location>
        <position position="351"/>
    </location>
</feature>
<feature type="sequence variant" id="VAR_019571" description="In JP/HHT and JPS; dbSNP:rs121912581." evidence="12 17">
    <original>G</original>
    <variation>R</variation>
    <location>
        <position position="352"/>
    </location>
</feature>
<feature type="sequence variant" id="VAR_019572" description="In JPS; dbSNP:rs80338963." evidence="39">
    <original>R</original>
    <variation>C</variation>
    <location>
        <position position="361"/>
    </location>
</feature>
<feature type="sequence variant" id="VAR_036477" description="In a colorectal cancer sample; somatic mutation; dbSNP:rs377767347." evidence="23">
    <original>R</original>
    <variation>H</variation>
    <location>
        <position position="361"/>
    </location>
</feature>
<feature type="sequence variant" id="VAR_019573" description="In JP/HHT; dbSNP:rs121912580." evidence="17">
    <original>G</original>
    <variation>D</variation>
    <location>
        <position position="386"/>
    </location>
</feature>
<feature type="sequence variant" id="VAR_011380" description="In pancreatic carcinoma; dbSNP:rs121912578." evidence="35">
    <original>D</original>
    <variation>H</variation>
    <location>
        <position position="493"/>
    </location>
</feature>
<feature type="sequence variant" id="VAR_067602" description="In MYHRS; dbSNP:rs281875320." evidence="29">
    <original>I</original>
    <variation>M</variation>
    <location>
        <position position="500"/>
    </location>
</feature>
<feature type="sequence variant" id="VAR_067603" description="In MYHRS; there is an enhanced levels of SMAD4 protein with lower levels of ubiquitinated SMAD4 fibroblasts compared to controls suggesting stabilization of the mutant protein; 8-fold increase in phosphorylated SMAD2 and SMAD3; 11-fold increase in phosphorylated SMAD1, SMAD5 and SMAD8 in cell nuclei compared to controls; dbSNP:rs281875321." evidence="29 30">
    <original>I</original>
    <variation>T</variation>
    <location>
        <position position="500"/>
    </location>
</feature>
<feature type="sequence variant" id="VAR_067604" description="In MYHRS; dbSNP:rs281875322." evidence="29 30">
    <original>I</original>
    <variation>V</variation>
    <location>
        <position position="500"/>
    </location>
</feature>
<feature type="mutagenesis site" description="No effect on heterotrimerization. Partially diminished transcriptional activation." evidence="8">
    <original>R</original>
    <variation>S</variation>
    <location>
        <position position="416"/>
    </location>
</feature>
<feature type="mutagenesis site" description="No effect on heterotrimerization. Partially diminished transcriptional activation.">
    <original>R</original>
    <variation>S</variation>
    <location>
        <position position="496"/>
    </location>
</feature>
<feature type="mutagenesis site" description="No effect on heterotrimerization. Greatly reduced transcriptional activation." evidence="8">
    <original>R</original>
    <variation>S</variation>
    <location>
        <position position="502"/>
    </location>
</feature>
<feature type="mutagenesis site" description="Reduced heterotrimerization." evidence="8">
    <original>R</original>
    <variation>S</variation>
    <location>
        <position position="515"/>
    </location>
</feature>
<feature type="mutagenesis site" description="Abolishes ubiquitination." evidence="27">
    <original>K</original>
    <variation>R</variation>
    <location>
        <position position="519"/>
    </location>
</feature>
<feature type="helix" evidence="48">
    <location>
        <begin position="16"/>
        <end position="24"/>
    </location>
</feature>
<feature type="strand" evidence="48">
    <location>
        <begin position="29"/>
        <end position="31"/>
    </location>
</feature>
<feature type="helix" evidence="48">
    <location>
        <begin position="33"/>
        <end position="47"/>
    </location>
</feature>
<feature type="helix" evidence="48">
    <location>
        <begin position="51"/>
        <end position="62"/>
    </location>
</feature>
<feature type="turn" evidence="48">
    <location>
        <begin position="63"/>
        <end position="65"/>
    </location>
</feature>
<feature type="strand" evidence="48">
    <location>
        <begin position="73"/>
        <end position="75"/>
    </location>
</feature>
<feature type="strand" evidence="48">
    <location>
        <begin position="78"/>
        <end position="80"/>
    </location>
</feature>
<feature type="strand" evidence="48">
    <location>
        <begin position="82"/>
        <end position="84"/>
    </location>
</feature>
<feature type="strand" evidence="48">
    <location>
        <begin position="87"/>
        <end position="89"/>
    </location>
</feature>
<feature type="helix" evidence="48">
    <location>
        <begin position="91"/>
        <end position="99"/>
    </location>
</feature>
<feature type="strand" evidence="48">
    <location>
        <begin position="109"/>
        <end position="111"/>
    </location>
</feature>
<feature type="helix" evidence="48">
    <location>
        <begin position="119"/>
        <end position="121"/>
    </location>
</feature>
<feature type="strand" evidence="48">
    <location>
        <begin position="124"/>
        <end position="127"/>
    </location>
</feature>
<feature type="helix" evidence="48">
    <location>
        <begin position="130"/>
        <end position="132"/>
    </location>
</feature>
<feature type="strand" evidence="48">
    <location>
        <begin position="133"/>
        <end position="135"/>
    </location>
</feature>
<feature type="helix" evidence="49">
    <location>
        <begin position="143"/>
        <end position="145"/>
    </location>
</feature>
<feature type="strand" evidence="45">
    <location>
        <begin position="288"/>
        <end position="291"/>
    </location>
</feature>
<feature type="strand" evidence="47">
    <location>
        <begin position="321"/>
        <end position="330"/>
    </location>
</feature>
<feature type="strand" evidence="47">
    <location>
        <begin position="333"/>
        <end position="342"/>
    </location>
</feature>
<feature type="strand" evidence="47">
    <location>
        <begin position="346"/>
        <end position="353"/>
    </location>
</feature>
<feature type="strand" evidence="47">
    <location>
        <begin position="359"/>
        <end position="363"/>
    </location>
</feature>
<feature type="helix" evidence="46">
    <location>
        <begin position="364"/>
        <end position="366"/>
    </location>
</feature>
<feature type="helix" evidence="47">
    <location>
        <begin position="374"/>
        <end position="380"/>
    </location>
</feature>
<feature type="turn" evidence="47">
    <location>
        <begin position="381"/>
        <end position="385"/>
    </location>
</feature>
<feature type="strand" evidence="47">
    <location>
        <begin position="387"/>
        <end position="392"/>
    </location>
</feature>
<feature type="turn" evidence="47">
    <location>
        <begin position="393"/>
        <end position="395"/>
    </location>
</feature>
<feature type="strand" evidence="47">
    <location>
        <begin position="396"/>
        <end position="401"/>
    </location>
</feature>
<feature type="strand" evidence="47">
    <location>
        <begin position="403"/>
        <end position="405"/>
    </location>
</feature>
<feature type="strand" evidence="47">
    <location>
        <begin position="407"/>
        <end position="410"/>
    </location>
</feature>
<feature type="helix" evidence="47">
    <location>
        <begin position="412"/>
        <end position="416"/>
    </location>
</feature>
<feature type="turn" evidence="47">
    <location>
        <begin position="417"/>
        <end position="419"/>
    </location>
</feature>
<feature type="strand" evidence="47">
    <location>
        <begin position="427"/>
        <end position="429"/>
    </location>
</feature>
<feature type="strand" evidence="47">
    <location>
        <begin position="434"/>
        <end position="438"/>
    </location>
</feature>
<feature type="helix" evidence="47">
    <location>
        <begin position="440"/>
        <end position="454"/>
    </location>
</feature>
<feature type="turn" evidence="45">
    <location>
        <begin position="455"/>
        <end position="458"/>
    </location>
</feature>
<feature type="helix" evidence="45">
    <location>
        <begin position="461"/>
        <end position="464"/>
    </location>
</feature>
<feature type="helix" evidence="47">
    <location>
        <begin position="493"/>
        <end position="497"/>
    </location>
</feature>
<feature type="strand" evidence="47">
    <location>
        <begin position="500"/>
        <end position="506"/>
    </location>
</feature>
<feature type="helix" evidence="47">
    <location>
        <begin position="518"/>
        <end position="520"/>
    </location>
</feature>
<feature type="strand" evidence="47">
    <location>
        <begin position="521"/>
        <end position="529"/>
    </location>
</feature>
<feature type="helix" evidence="47">
    <location>
        <begin position="530"/>
        <end position="541"/>
    </location>
</feature>
<protein>
    <recommendedName>
        <fullName>Mothers against decapentaplegic homolog 4</fullName>
        <shortName>MAD homolog 4</shortName>
        <shortName>Mothers against DPP homolog 4</shortName>
    </recommendedName>
    <alternativeName>
        <fullName>Deletion target in pancreatic carcinoma 4</fullName>
    </alternativeName>
    <alternativeName>
        <fullName>SMAD family member 4</fullName>
        <shortName>SMAD 4</shortName>
        <shortName>Smad4</shortName>
        <shortName>hSMAD4</shortName>
    </alternativeName>
</protein>
<dbReference type="EMBL" id="AF045447">
    <property type="protein sequence ID" value="AAC03051.1"/>
    <property type="molecule type" value="Genomic_DNA"/>
</dbReference>
<dbReference type="EMBL" id="AF045438">
    <property type="protein sequence ID" value="AAC03051.1"/>
    <property type="status" value="JOINED"/>
    <property type="molecule type" value="Genomic_DNA"/>
</dbReference>
<dbReference type="EMBL" id="AF045439">
    <property type="protein sequence ID" value="AAC03051.1"/>
    <property type="status" value="JOINED"/>
    <property type="molecule type" value="Genomic_DNA"/>
</dbReference>
<dbReference type="EMBL" id="AF045440">
    <property type="protein sequence ID" value="AAC03051.1"/>
    <property type="status" value="JOINED"/>
    <property type="molecule type" value="Genomic_DNA"/>
</dbReference>
<dbReference type="EMBL" id="AF045441">
    <property type="protein sequence ID" value="AAC03051.1"/>
    <property type="status" value="JOINED"/>
    <property type="molecule type" value="Genomic_DNA"/>
</dbReference>
<dbReference type="EMBL" id="AF045442">
    <property type="protein sequence ID" value="AAC03051.1"/>
    <property type="status" value="JOINED"/>
    <property type="molecule type" value="Genomic_DNA"/>
</dbReference>
<dbReference type="EMBL" id="AF045443">
    <property type="protein sequence ID" value="AAC03051.1"/>
    <property type="status" value="JOINED"/>
    <property type="molecule type" value="Genomic_DNA"/>
</dbReference>
<dbReference type="EMBL" id="AF045444">
    <property type="protein sequence ID" value="AAC03051.1"/>
    <property type="status" value="JOINED"/>
    <property type="molecule type" value="Genomic_DNA"/>
</dbReference>
<dbReference type="EMBL" id="AF045445">
    <property type="protein sequence ID" value="AAC03051.1"/>
    <property type="status" value="JOINED"/>
    <property type="molecule type" value="Genomic_DNA"/>
</dbReference>
<dbReference type="EMBL" id="AF045446">
    <property type="protein sequence ID" value="AAC03051.1"/>
    <property type="status" value="JOINED"/>
    <property type="molecule type" value="Genomic_DNA"/>
</dbReference>
<dbReference type="EMBL" id="U44378">
    <property type="protein sequence ID" value="AAA91041.1"/>
    <property type="molecule type" value="mRNA"/>
</dbReference>
<dbReference type="EMBL" id="AK290770">
    <property type="protein sequence ID" value="BAF83459.1"/>
    <property type="molecule type" value="mRNA"/>
</dbReference>
<dbReference type="EMBL" id="CH471096">
    <property type="protein sequence ID" value="EAW62985.1"/>
    <property type="molecule type" value="Genomic_DNA"/>
</dbReference>
<dbReference type="EMBL" id="BC002379">
    <property type="protein sequence ID" value="AAH02379.1"/>
    <property type="molecule type" value="mRNA"/>
</dbReference>
<dbReference type="CCDS" id="CCDS11950.1"/>
<dbReference type="PIR" id="S71811">
    <property type="entry name" value="S71811"/>
</dbReference>
<dbReference type="RefSeq" id="NP_001393970.1">
    <property type="nucleotide sequence ID" value="NM_001407041.1"/>
</dbReference>
<dbReference type="RefSeq" id="NP_001393971.1">
    <property type="nucleotide sequence ID" value="NM_001407042.1"/>
</dbReference>
<dbReference type="RefSeq" id="NP_005350.1">
    <property type="nucleotide sequence ID" value="NM_005359.6"/>
</dbReference>
<dbReference type="PDB" id="1DD1">
    <property type="method" value="X-ray"/>
    <property type="resolution" value="2.62 A"/>
    <property type="chains" value="A/B/C=285-552"/>
</dbReference>
<dbReference type="PDB" id="1G88">
    <property type="method" value="X-ray"/>
    <property type="resolution" value="3.00 A"/>
    <property type="chains" value="A/B/C=285-552"/>
</dbReference>
<dbReference type="PDB" id="1MR1">
    <property type="method" value="X-ray"/>
    <property type="resolution" value="2.85 A"/>
    <property type="chains" value="A/B=319-552"/>
</dbReference>
<dbReference type="PDB" id="1U7F">
    <property type="method" value="X-ray"/>
    <property type="resolution" value="2.60 A"/>
    <property type="chains" value="B=314-552"/>
</dbReference>
<dbReference type="PDB" id="1U7V">
    <property type="method" value="X-ray"/>
    <property type="resolution" value="2.70 A"/>
    <property type="chains" value="B=314-549"/>
</dbReference>
<dbReference type="PDB" id="1YGS">
    <property type="method" value="X-ray"/>
    <property type="resolution" value="2.10 A"/>
    <property type="chains" value="A=319-552"/>
</dbReference>
<dbReference type="PDB" id="5C4V">
    <property type="method" value="X-ray"/>
    <property type="resolution" value="2.60 A"/>
    <property type="chains" value="A/C/E=314-549"/>
</dbReference>
<dbReference type="PDB" id="5MEY">
    <property type="method" value="X-ray"/>
    <property type="resolution" value="2.05 A"/>
    <property type="chains" value="A=10-140"/>
</dbReference>
<dbReference type="PDB" id="5MEZ">
    <property type="method" value="X-ray"/>
    <property type="resolution" value="2.98 A"/>
    <property type="chains" value="A/B=10-140"/>
</dbReference>
<dbReference type="PDB" id="5MF0">
    <property type="method" value="X-ray"/>
    <property type="resolution" value="3.03 A"/>
    <property type="chains" value="A/B=10-140"/>
</dbReference>
<dbReference type="PDB" id="5UWU">
    <property type="method" value="X-ray"/>
    <property type="resolution" value="2.24 A"/>
    <property type="chains" value="D=133-149"/>
</dbReference>
<dbReference type="PDB" id="6YIC">
    <property type="method" value="X-ray"/>
    <property type="resolution" value="1.60 A"/>
    <property type="chains" value="P=398-406"/>
</dbReference>
<dbReference type="PDBsum" id="1DD1"/>
<dbReference type="PDBsum" id="1G88"/>
<dbReference type="PDBsum" id="1MR1"/>
<dbReference type="PDBsum" id="1U7F"/>
<dbReference type="PDBsum" id="1U7V"/>
<dbReference type="PDBsum" id="1YGS"/>
<dbReference type="PDBsum" id="5C4V"/>
<dbReference type="PDBsum" id="5MEY"/>
<dbReference type="PDBsum" id="5MEZ"/>
<dbReference type="PDBsum" id="5MF0"/>
<dbReference type="PDBsum" id="5UWU"/>
<dbReference type="PDBsum" id="6YIC"/>
<dbReference type="SASBDB" id="Q13485"/>
<dbReference type="SMR" id="Q13485"/>
<dbReference type="BioGRID" id="110264">
    <property type="interactions" value="525"/>
</dbReference>
<dbReference type="ComplexPortal" id="CPX-1">
    <property type="entry name" value="SMAD2-SMAD3-SMAD4 complex"/>
</dbReference>
<dbReference type="ComplexPortal" id="CPX-3208">
    <property type="entry name" value="SMAD2-SMAD4 complex"/>
</dbReference>
<dbReference type="ComplexPortal" id="CPX-3252">
    <property type="entry name" value="SMAD3-SMAD4 complex"/>
</dbReference>
<dbReference type="ComplexPortal" id="CPX-54">
    <property type="entry name" value="SMAD1-SMAD4 complex"/>
</dbReference>
<dbReference type="CORUM" id="Q13485"/>
<dbReference type="DIP" id="DIP-31512N"/>
<dbReference type="FunCoup" id="Q13485">
    <property type="interactions" value="4708"/>
</dbReference>
<dbReference type="IntAct" id="Q13485">
    <property type="interactions" value="154"/>
</dbReference>
<dbReference type="MINT" id="Q13485"/>
<dbReference type="STRING" id="9606.ENSP00000341551"/>
<dbReference type="GlyCosmos" id="Q13485">
    <property type="glycosylation" value="5 sites, 1 glycan"/>
</dbReference>
<dbReference type="GlyGen" id="Q13485">
    <property type="glycosylation" value="9 sites, 1 O-linked glycan (9 sites)"/>
</dbReference>
<dbReference type="iPTMnet" id="Q13485"/>
<dbReference type="MetOSite" id="Q13485"/>
<dbReference type="PhosphoSitePlus" id="Q13485"/>
<dbReference type="SwissPalm" id="Q13485"/>
<dbReference type="BioMuta" id="SMAD4"/>
<dbReference type="DMDM" id="13959561"/>
<dbReference type="CPTAC" id="CPTAC-1268"/>
<dbReference type="CPTAC" id="CPTAC-1269"/>
<dbReference type="jPOST" id="Q13485"/>
<dbReference type="MassIVE" id="Q13485"/>
<dbReference type="PaxDb" id="9606-ENSP00000341551"/>
<dbReference type="PeptideAtlas" id="Q13485"/>
<dbReference type="ProteomicsDB" id="59479"/>
<dbReference type="Pumba" id="Q13485"/>
<dbReference type="Antibodypedia" id="3711">
    <property type="antibodies" value="1150 antibodies from 45 providers"/>
</dbReference>
<dbReference type="DNASU" id="4089"/>
<dbReference type="Ensembl" id="ENST00000342988.8">
    <property type="protein sequence ID" value="ENSP00000341551.3"/>
    <property type="gene ID" value="ENSG00000141646.17"/>
</dbReference>
<dbReference type="Ensembl" id="ENST00000398417.6">
    <property type="protein sequence ID" value="ENSP00000381452.1"/>
    <property type="gene ID" value="ENSG00000141646.17"/>
</dbReference>
<dbReference type="Ensembl" id="ENST00000588860.6">
    <property type="protein sequence ID" value="ENSP00000465878.2"/>
    <property type="gene ID" value="ENSG00000141646.17"/>
</dbReference>
<dbReference type="Ensembl" id="ENST00000589076.6">
    <property type="protein sequence ID" value="ENSP00000466934.2"/>
    <property type="gene ID" value="ENSG00000141646.17"/>
</dbReference>
<dbReference type="Ensembl" id="ENST00000589941.2">
    <property type="protein sequence ID" value="ENSP00000465874.2"/>
    <property type="gene ID" value="ENSG00000141646.17"/>
</dbReference>
<dbReference type="Ensembl" id="ENST00000590061.2">
    <property type="protein sequence ID" value="ENSP00000464772.2"/>
    <property type="gene ID" value="ENSG00000141646.17"/>
</dbReference>
<dbReference type="GeneID" id="4089"/>
<dbReference type="KEGG" id="hsa:4089"/>
<dbReference type="MANE-Select" id="ENST00000342988.8">
    <property type="protein sequence ID" value="ENSP00000341551.3"/>
    <property type="RefSeq nucleotide sequence ID" value="NM_005359.6"/>
    <property type="RefSeq protein sequence ID" value="NP_005350.1"/>
</dbReference>
<dbReference type="UCSC" id="uc010xdp.3">
    <property type="organism name" value="human"/>
</dbReference>
<dbReference type="AGR" id="HGNC:6770"/>
<dbReference type="CTD" id="4089"/>
<dbReference type="DisGeNET" id="4089"/>
<dbReference type="GeneCards" id="SMAD4"/>
<dbReference type="GeneReviews" id="SMAD4"/>
<dbReference type="HGNC" id="HGNC:6770">
    <property type="gene designation" value="SMAD4"/>
</dbReference>
<dbReference type="HPA" id="ENSG00000141646">
    <property type="expression patterns" value="Low tissue specificity"/>
</dbReference>
<dbReference type="MalaCards" id="SMAD4"/>
<dbReference type="MIM" id="114500">
    <property type="type" value="phenotype"/>
</dbReference>
<dbReference type="MIM" id="139210">
    <property type="type" value="phenotype"/>
</dbReference>
<dbReference type="MIM" id="174900">
    <property type="type" value="phenotype"/>
</dbReference>
<dbReference type="MIM" id="175050">
    <property type="type" value="phenotype"/>
</dbReference>
<dbReference type="MIM" id="260350">
    <property type="type" value="phenotype"/>
</dbReference>
<dbReference type="MIM" id="600993">
    <property type="type" value="gene"/>
</dbReference>
<dbReference type="neXtProt" id="NX_Q13485"/>
<dbReference type="OpenTargets" id="ENSG00000141646"/>
<dbReference type="Orphanet" id="1333">
    <property type="disease" value="Familial pancreatic carcinoma"/>
</dbReference>
<dbReference type="Orphanet" id="91387">
    <property type="disease" value="Familial thoracic aortic aneurysm and aortic dissection"/>
</dbReference>
<dbReference type="Orphanet" id="329971">
    <property type="disease" value="Generalized juvenile polyposis/juvenile polyposis coli"/>
</dbReference>
<dbReference type="Orphanet" id="774">
    <property type="disease" value="Hereditary hemorrhagic telangiectasia"/>
</dbReference>
<dbReference type="Orphanet" id="2588">
    <property type="disease" value="Myhre syndrome"/>
</dbReference>
<dbReference type="PharmGKB" id="PA30527"/>
<dbReference type="VEuPathDB" id="HostDB:ENSG00000141646"/>
<dbReference type="eggNOG" id="KOG3701">
    <property type="taxonomic scope" value="Eukaryota"/>
</dbReference>
<dbReference type="GeneTree" id="ENSGT00940000157435"/>
<dbReference type="InParanoid" id="Q13485"/>
<dbReference type="OMA" id="CWIEVQI"/>
<dbReference type="OrthoDB" id="5875866at2759"/>
<dbReference type="PAN-GO" id="Q13485">
    <property type="GO annotations" value="10 GO annotations based on evolutionary models"/>
</dbReference>
<dbReference type="PhylomeDB" id="Q13485"/>
<dbReference type="TreeFam" id="TF314923"/>
<dbReference type="PathwayCommons" id="Q13485"/>
<dbReference type="Reactome" id="R-HSA-1181150">
    <property type="pathway name" value="Signaling by NODAL"/>
</dbReference>
<dbReference type="Reactome" id="R-HSA-1502540">
    <property type="pathway name" value="Signaling by Activin"/>
</dbReference>
<dbReference type="Reactome" id="R-HSA-201451">
    <property type="pathway name" value="Signaling by BMP"/>
</dbReference>
<dbReference type="Reactome" id="R-HSA-2173789">
    <property type="pathway name" value="TGF-beta receptor signaling activates SMADs"/>
</dbReference>
<dbReference type="Reactome" id="R-HSA-2173795">
    <property type="pathway name" value="Downregulation of SMAD2/3:SMAD4 transcriptional activity"/>
</dbReference>
<dbReference type="Reactome" id="R-HSA-2173796">
    <property type="pathway name" value="SMAD2/SMAD3:SMAD4 heterotrimer regulates transcription"/>
</dbReference>
<dbReference type="Reactome" id="R-HSA-3311021">
    <property type="pathway name" value="SMAD4 MH2 Domain Mutants in Cancer"/>
</dbReference>
<dbReference type="Reactome" id="R-HSA-3315487">
    <property type="pathway name" value="SMAD2/3 MH2 Domain Mutants in Cancer"/>
</dbReference>
<dbReference type="Reactome" id="R-HSA-452723">
    <property type="pathway name" value="Transcriptional regulation of pluripotent stem cells"/>
</dbReference>
<dbReference type="Reactome" id="R-HSA-5689880">
    <property type="pathway name" value="Ub-specific processing proteases"/>
</dbReference>
<dbReference type="Reactome" id="R-HSA-8941326">
    <property type="pathway name" value="RUNX2 regulates bone development"/>
</dbReference>
<dbReference type="Reactome" id="R-HSA-8941855">
    <property type="pathway name" value="RUNX3 regulates CDKN1A transcription"/>
</dbReference>
<dbReference type="Reactome" id="R-HSA-8952158">
    <property type="pathway name" value="RUNX3 regulates BCL2L11 (BIM) transcription"/>
</dbReference>
<dbReference type="Reactome" id="R-HSA-9615017">
    <property type="pathway name" value="FOXO-mediated transcription of oxidative stress, metabolic and neuronal genes"/>
</dbReference>
<dbReference type="Reactome" id="R-HSA-9617828">
    <property type="pathway name" value="FOXO-mediated transcription of cell cycle genes"/>
</dbReference>
<dbReference type="Reactome" id="R-HSA-9733709">
    <property type="pathway name" value="Cardiogenesis"/>
</dbReference>
<dbReference type="Reactome" id="R-HSA-9735871">
    <property type="pathway name" value="SARS-CoV-1 targets host intracellular signalling and regulatory pathways"/>
</dbReference>
<dbReference type="Reactome" id="R-HSA-9754189">
    <property type="pathway name" value="Germ layer formation at gastrulation"/>
</dbReference>
<dbReference type="Reactome" id="R-HSA-9823730">
    <property type="pathway name" value="Formation of definitive endoderm"/>
</dbReference>
<dbReference type="Reactome" id="R-HSA-9839394">
    <property type="pathway name" value="TGFBR3 expression"/>
</dbReference>
<dbReference type="Reactome" id="R-HSA-9844594">
    <property type="pathway name" value="Transcriptional regulation of brown and beige adipocyte differentiation by EBF2"/>
</dbReference>
<dbReference type="SignaLink" id="Q13485"/>
<dbReference type="SIGNOR" id="Q13485"/>
<dbReference type="BioGRID-ORCS" id="4089">
    <property type="hits" value="81 hits in 1216 CRISPR screens"/>
</dbReference>
<dbReference type="ChiTaRS" id="SMAD4">
    <property type="organism name" value="human"/>
</dbReference>
<dbReference type="EvolutionaryTrace" id="Q13485"/>
<dbReference type="GeneWiki" id="Mothers_against_decapentaplegic_homolog_4"/>
<dbReference type="GenomeRNAi" id="4089"/>
<dbReference type="Pharos" id="Q13485">
    <property type="development level" value="Tbio"/>
</dbReference>
<dbReference type="PRO" id="PR:Q13485"/>
<dbReference type="Proteomes" id="UP000005640">
    <property type="component" value="Chromosome 18"/>
</dbReference>
<dbReference type="RNAct" id="Q13485">
    <property type="molecule type" value="protein"/>
</dbReference>
<dbReference type="Bgee" id="ENSG00000141646">
    <property type="expression patterns" value="Expressed in ventricular zone and 198 other cell types or tissues"/>
</dbReference>
<dbReference type="ExpressionAtlas" id="Q13485">
    <property type="expression patterns" value="baseline and differential"/>
</dbReference>
<dbReference type="GO" id="GO:0032444">
    <property type="term" value="C:activin responsive factor complex"/>
    <property type="evidence" value="ECO:0000314"/>
    <property type="project" value="BHF-UCL"/>
</dbReference>
<dbReference type="GO" id="GO:0005813">
    <property type="term" value="C:centrosome"/>
    <property type="evidence" value="ECO:0000314"/>
    <property type="project" value="HPA"/>
</dbReference>
<dbReference type="GO" id="GO:0000785">
    <property type="term" value="C:chromatin"/>
    <property type="evidence" value="ECO:0000314"/>
    <property type="project" value="BHF-UCL"/>
</dbReference>
<dbReference type="GO" id="GO:0036064">
    <property type="term" value="C:ciliary basal body"/>
    <property type="evidence" value="ECO:0000314"/>
    <property type="project" value="HPA"/>
</dbReference>
<dbReference type="GO" id="GO:0005737">
    <property type="term" value="C:cytoplasm"/>
    <property type="evidence" value="ECO:0000314"/>
    <property type="project" value="BHF-UCL"/>
</dbReference>
<dbReference type="GO" id="GO:0005829">
    <property type="term" value="C:cytosol"/>
    <property type="evidence" value="ECO:0000314"/>
    <property type="project" value="HPA"/>
</dbReference>
<dbReference type="GO" id="GO:0071144">
    <property type="term" value="C:heteromeric SMAD protein complex"/>
    <property type="evidence" value="ECO:0000353"/>
    <property type="project" value="ComplexPortal"/>
</dbReference>
<dbReference type="GO" id="GO:0005654">
    <property type="term" value="C:nucleoplasm"/>
    <property type="evidence" value="ECO:0000314"/>
    <property type="project" value="HPA"/>
</dbReference>
<dbReference type="GO" id="GO:0005634">
    <property type="term" value="C:nucleus"/>
    <property type="evidence" value="ECO:0000314"/>
    <property type="project" value="BHF-UCL"/>
</dbReference>
<dbReference type="GO" id="GO:0071141">
    <property type="term" value="C:SMAD protein complex"/>
    <property type="evidence" value="ECO:0000314"/>
    <property type="project" value="UniProtKB"/>
</dbReference>
<dbReference type="GO" id="GO:0005667">
    <property type="term" value="C:transcription regulator complex"/>
    <property type="evidence" value="ECO:0000314"/>
    <property type="project" value="BHF-UCL"/>
</dbReference>
<dbReference type="GO" id="GO:0003682">
    <property type="term" value="F:chromatin binding"/>
    <property type="evidence" value="ECO:0007669"/>
    <property type="project" value="Ensembl"/>
</dbReference>
<dbReference type="GO" id="GO:0005518">
    <property type="term" value="F:collagen binding"/>
    <property type="evidence" value="ECO:0007669"/>
    <property type="project" value="Ensembl"/>
</dbReference>
<dbReference type="GO" id="GO:0001228">
    <property type="term" value="F:DNA-binding transcription activator activity, RNA polymerase II-specific"/>
    <property type="evidence" value="ECO:0000314"/>
    <property type="project" value="GO_Central"/>
</dbReference>
<dbReference type="GO" id="GO:0003700">
    <property type="term" value="F:DNA-binding transcription factor activity"/>
    <property type="evidence" value="ECO:0000314"/>
    <property type="project" value="BHF-UCL"/>
</dbReference>
<dbReference type="GO" id="GO:0000981">
    <property type="term" value="F:DNA-binding transcription factor activity, RNA polymerase II-specific"/>
    <property type="evidence" value="ECO:0000247"/>
    <property type="project" value="NTNU_SB"/>
</dbReference>
<dbReference type="GO" id="GO:0031005">
    <property type="term" value="F:filamin binding"/>
    <property type="evidence" value="ECO:0007669"/>
    <property type="project" value="Ensembl"/>
</dbReference>
<dbReference type="GO" id="GO:0070411">
    <property type="term" value="F:I-SMAD binding"/>
    <property type="evidence" value="ECO:0000353"/>
    <property type="project" value="BHF-UCL"/>
</dbReference>
<dbReference type="GO" id="GO:0042802">
    <property type="term" value="F:identical protein binding"/>
    <property type="evidence" value="ECO:0000353"/>
    <property type="project" value="IntAct"/>
</dbReference>
<dbReference type="GO" id="GO:0046872">
    <property type="term" value="F:metal ion binding"/>
    <property type="evidence" value="ECO:0007669"/>
    <property type="project" value="UniProtKB-KW"/>
</dbReference>
<dbReference type="GO" id="GO:0042803">
    <property type="term" value="F:protein homodimerization activity"/>
    <property type="evidence" value="ECO:0000353"/>
    <property type="project" value="BHF-UCL"/>
</dbReference>
<dbReference type="GO" id="GO:0070412">
    <property type="term" value="F:R-SMAD binding"/>
    <property type="evidence" value="ECO:0000353"/>
    <property type="project" value="BHF-UCL"/>
</dbReference>
<dbReference type="GO" id="GO:0000978">
    <property type="term" value="F:RNA polymerase II cis-regulatory region sequence-specific DNA binding"/>
    <property type="evidence" value="ECO:0000314"/>
    <property type="project" value="GO_Central"/>
</dbReference>
<dbReference type="GO" id="GO:0061629">
    <property type="term" value="F:RNA polymerase II-specific DNA-binding transcription factor binding"/>
    <property type="evidence" value="ECO:0007669"/>
    <property type="project" value="Ensembl"/>
</dbReference>
<dbReference type="GO" id="GO:0043565">
    <property type="term" value="F:sequence-specific DNA binding"/>
    <property type="evidence" value="ECO:0000314"/>
    <property type="project" value="BHF-UCL"/>
</dbReference>
<dbReference type="GO" id="GO:0043199">
    <property type="term" value="F:sulfate binding"/>
    <property type="evidence" value="ECO:0000315"/>
    <property type="project" value="CAFA"/>
</dbReference>
<dbReference type="GO" id="GO:0000976">
    <property type="term" value="F:transcription cis-regulatory region binding"/>
    <property type="evidence" value="ECO:0000314"/>
    <property type="project" value="BHF-UCL"/>
</dbReference>
<dbReference type="GO" id="GO:0001223">
    <property type="term" value="F:transcription coactivator binding"/>
    <property type="evidence" value="ECO:0000353"/>
    <property type="project" value="UniProtKB"/>
</dbReference>
<dbReference type="GO" id="GO:0001222">
    <property type="term" value="F:transcription corepressor binding"/>
    <property type="evidence" value="ECO:0000353"/>
    <property type="project" value="HGNC-UCL"/>
</dbReference>
<dbReference type="GO" id="GO:0032924">
    <property type="term" value="P:activin receptor signaling pathway"/>
    <property type="evidence" value="ECO:0000303"/>
    <property type="project" value="ComplexPortal"/>
</dbReference>
<dbReference type="GO" id="GO:0030325">
    <property type="term" value="P:adrenal gland development"/>
    <property type="evidence" value="ECO:0007669"/>
    <property type="project" value="Ensembl"/>
</dbReference>
<dbReference type="GO" id="GO:0009653">
    <property type="term" value="P:anatomical structure morphogenesis"/>
    <property type="evidence" value="ECO:0000318"/>
    <property type="project" value="GO_Central"/>
</dbReference>
<dbReference type="GO" id="GO:0036302">
    <property type="term" value="P:atrioventricular canal development"/>
    <property type="evidence" value="ECO:0000250"/>
    <property type="project" value="BHF-UCL"/>
</dbReference>
<dbReference type="GO" id="GO:0003190">
    <property type="term" value="P:atrioventricular valve formation"/>
    <property type="evidence" value="ECO:0000250"/>
    <property type="project" value="BHF-UCL"/>
</dbReference>
<dbReference type="GO" id="GO:0007411">
    <property type="term" value="P:axon guidance"/>
    <property type="evidence" value="ECO:0007669"/>
    <property type="project" value="Ensembl"/>
</dbReference>
<dbReference type="GO" id="GO:0030509">
    <property type="term" value="P:BMP signaling pathway"/>
    <property type="evidence" value="ECO:0000314"/>
    <property type="project" value="BHF-UCL"/>
</dbReference>
<dbReference type="GO" id="GO:0003360">
    <property type="term" value="P:brainstem development"/>
    <property type="evidence" value="ECO:0007669"/>
    <property type="project" value="Ensembl"/>
</dbReference>
<dbReference type="GO" id="GO:0001658">
    <property type="term" value="P:branching involved in ureteric bud morphogenesis"/>
    <property type="evidence" value="ECO:0007669"/>
    <property type="project" value="Ensembl"/>
</dbReference>
<dbReference type="GO" id="GO:0003161">
    <property type="term" value="P:cardiac conduction system development"/>
    <property type="evidence" value="ECO:0000303"/>
    <property type="project" value="BHF-UCL"/>
</dbReference>
<dbReference type="GO" id="GO:0014898">
    <property type="term" value="P:cardiac muscle hypertrophy in response to stress"/>
    <property type="evidence" value="ECO:0007669"/>
    <property type="project" value="Ensembl"/>
</dbReference>
<dbReference type="GO" id="GO:0030154">
    <property type="term" value="P:cell differentiation"/>
    <property type="evidence" value="ECO:0000318"/>
    <property type="project" value="GO_Central"/>
</dbReference>
<dbReference type="GO" id="GO:0008283">
    <property type="term" value="P:cell population proliferation"/>
    <property type="evidence" value="ECO:0007669"/>
    <property type="project" value="Ensembl"/>
</dbReference>
<dbReference type="GO" id="GO:0071773">
    <property type="term" value="P:cellular response to BMP stimulus"/>
    <property type="evidence" value="ECO:0000303"/>
    <property type="project" value="BHF-UCL"/>
</dbReference>
<dbReference type="GO" id="GO:0071333">
    <property type="term" value="P:cellular response to glucose stimulus"/>
    <property type="evidence" value="ECO:0007669"/>
    <property type="project" value="Ensembl"/>
</dbReference>
<dbReference type="GO" id="GO:0071560">
    <property type="term" value="P:cellular response to transforming growth factor beta stimulus"/>
    <property type="evidence" value="ECO:0000315"/>
    <property type="project" value="BHF-UCL"/>
</dbReference>
<dbReference type="GO" id="GO:0048589">
    <property type="term" value="P:developmental growth"/>
    <property type="evidence" value="ECO:0007669"/>
    <property type="project" value="Ensembl"/>
</dbReference>
<dbReference type="GO" id="GO:0006351">
    <property type="term" value="P:DNA-templated transcription"/>
    <property type="evidence" value="ECO:0000314"/>
    <property type="project" value="ComplexPortal"/>
</dbReference>
<dbReference type="GO" id="GO:0042733">
    <property type="term" value="P:embryonic digit morphogenesis"/>
    <property type="evidence" value="ECO:0007669"/>
    <property type="project" value="Ensembl"/>
</dbReference>
<dbReference type="GO" id="GO:0060956">
    <property type="term" value="P:endocardial cell differentiation"/>
    <property type="evidence" value="ECO:0000250"/>
    <property type="project" value="BHF-UCL"/>
</dbReference>
<dbReference type="GO" id="GO:0042118">
    <property type="term" value="P:endothelial cell activation"/>
    <property type="evidence" value="ECO:0007669"/>
    <property type="project" value="Ensembl"/>
</dbReference>
<dbReference type="GO" id="GO:0010631">
    <property type="term" value="P:epithelial cell migration"/>
    <property type="evidence" value="ECO:0000315"/>
    <property type="project" value="BHF-UCL"/>
</dbReference>
<dbReference type="GO" id="GO:0001837">
    <property type="term" value="P:epithelial to mesenchymal transition"/>
    <property type="evidence" value="ECO:0000315"/>
    <property type="project" value="BHF-UCL"/>
</dbReference>
<dbReference type="GO" id="GO:0003198">
    <property type="term" value="P:epithelial to mesenchymal transition involved in endocardial cushion formation"/>
    <property type="evidence" value="ECO:0007669"/>
    <property type="project" value="Ensembl"/>
</dbReference>
<dbReference type="GO" id="GO:0070371">
    <property type="term" value="P:ERK1 and ERK2 cascade"/>
    <property type="evidence" value="ECO:0007669"/>
    <property type="project" value="Ensembl"/>
</dbReference>
<dbReference type="GO" id="GO:0097191">
    <property type="term" value="P:extrinsic apoptotic signaling pathway"/>
    <property type="evidence" value="ECO:0000315"/>
    <property type="project" value="BHF-UCL"/>
</dbReference>
<dbReference type="GO" id="GO:0061040">
    <property type="term" value="P:female gonad morphogenesis"/>
    <property type="evidence" value="ECO:0007669"/>
    <property type="project" value="Ensembl"/>
</dbReference>
<dbReference type="GO" id="GO:0048859">
    <property type="term" value="P:formation of anatomical boundary"/>
    <property type="evidence" value="ECO:0007669"/>
    <property type="project" value="Ensembl"/>
</dbReference>
<dbReference type="GO" id="GO:0001702">
    <property type="term" value="P:gastrulation with mouth forming second"/>
    <property type="evidence" value="ECO:0007669"/>
    <property type="project" value="Ensembl"/>
</dbReference>
<dbReference type="GO" id="GO:0001701">
    <property type="term" value="P:in utero embryonic development"/>
    <property type="evidence" value="ECO:0007669"/>
    <property type="project" value="Ensembl"/>
</dbReference>
<dbReference type="GO" id="GO:0070102">
    <property type="term" value="P:interleukin-6-mediated signaling pathway"/>
    <property type="evidence" value="ECO:0000250"/>
    <property type="project" value="BHF-UCL"/>
</dbReference>
<dbReference type="GO" id="GO:0006879">
    <property type="term" value="P:intracellular iron ion homeostasis"/>
    <property type="evidence" value="ECO:0000250"/>
    <property type="project" value="BHF-UCL"/>
</dbReference>
<dbReference type="GO" id="GO:0035556">
    <property type="term" value="P:intracellular signal transduction"/>
    <property type="evidence" value="ECO:0000315"/>
    <property type="project" value="CACAO"/>
</dbReference>
<dbReference type="GO" id="GO:0003220">
    <property type="term" value="P:left ventricular cardiac muscle tissue morphogenesis"/>
    <property type="evidence" value="ECO:0000250"/>
    <property type="project" value="BHF-UCL"/>
</dbReference>
<dbReference type="GO" id="GO:0048382">
    <property type="term" value="P:mesendoderm development"/>
    <property type="evidence" value="ECO:0007669"/>
    <property type="project" value="Ensembl"/>
</dbReference>
<dbReference type="GO" id="GO:0072133">
    <property type="term" value="P:metanephric mesenchyme morphogenesis"/>
    <property type="evidence" value="ECO:0007669"/>
    <property type="project" value="Ensembl"/>
</dbReference>
<dbReference type="GO" id="GO:0090090">
    <property type="term" value="P:negative regulation of canonical Wnt signaling pathway"/>
    <property type="evidence" value="ECO:0000315"/>
    <property type="project" value="BHF-UCL"/>
</dbReference>
<dbReference type="GO" id="GO:0010614">
    <property type="term" value="P:negative regulation of cardiac muscle hypertrophy"/>
    <property type="evidence" value="ECO:0000250"/>
    <property type="project" value="BHF-UCL"/>
</dbReference>
<dbReference type="GO" id="GO:1905305">
    <property type="term" value="P:negative regulation of cardiac myofibril assembly"/>
    <property type="evidence" value="ECO:0000250"/>
    <property type="project" value="BHF-UCL"/>
</dbReference>
<dbReference type="GO" id="GO:0030308">
    <property type="term" value="P:negative regulation of cell growth"/>
    <property type="evidence" value="ECO:0000314"/>
    <property type="project" value="BHF-UCL"/>
</dbReference>
<dbReference type="GO" id="GO:0008285">
    <property type="term" value="P:negative regulation of cell population proliferation"/>
    <property type="evidence" value="ECO:0007669"/>
    <property type="project" value="Ensembl"/>
</dbReference>
<dbReference type="GO" id="GO:0045892">
    <property type="term" value="P:negative regulation of DNA-templated transcription"/>
    <property type="evidence" value="ECO:0000314"/>
    <property type="project" value="BHF-UCL"/>
</dbReference>
<dbReference type="GO" id="GO:0070373">
    <property type="term" value="P:negative regulation of ERK1 and ERK2 cascade"/>
    <property type="evidence" value="ECO:0000250"/>
    <property type="project" value="BHF-UCL"/>
</dbReference>
<dbReference type="GO" id="GO:0042177">
    <property type="term" value="P:negative regulation of protein catabolic process"/>
    <property type="evidence" value="ECO:0007669"/>
    <property type="project" value="Ensembl"/>
</dbReference>
<dbReference type="GO" id="GO:0000122">
    <property type="term" value="P:negative regulation of transcription by RNA polymerase II"/>
    <property type="evidence" value="ECO:0000250"/>
    <property type="project" value="BHF-UCL"/>
</dbReference>
<dbReference type="GO" id="GO:0072134">
    <property type="term" value="P:nephrogenic mesenchyme morphogenesis"/>
    <property type="evidence" value="ECO:0007669"/>
    <property type="project" value="Ensembl"/>
</dbReference>
<dbReference type="GO" id="GO:0014033">
    <property type="term" value="P:neural crest cell differentiation"/>
    <property type="evidence" value="ECO:0007669"/>
    <property type="project" value="Ensembl"/>
</dbReference>
<dbReference type="GO" id="GO:0048665">
    <property type="term" value="P:neuron fate specification"/>
    <property type="evidence" value="ECO:0000315"/>
    <property type="project" value="BHF-UCL"/>
</dbReference>
<dbReference type="GO" id="GO:0001649">
    <property type="term" value="P:osteoblast differentiation"/>
    <property type="evidence" value="ECO:0007669"/>
    <property type="project" value="Ensembl"/>
</dbReference>
<dbReference type="GO" id="GO:0003148">
    <property type="term" value="P:outflow tract septum morphogenesis"/>
    <property type="evidence" value="ECO:0000250"/>
    <property type="project" value="BHF-UCL"/>
</dbReference>
<dbReference type="GO" id="GO:0001541">
    <property type="term" value="P:ovarian follicle development"/>
    <property type="evidence" value="ECO:0007669"/>
    <property type="project" value="Ensembl"/>
</dbReference>
<dbReference type="GO" id="GO:0010666">
    <property type="term" value="P:positive regulation of cardiac muscle cell apoptotic process"/>
    <property type="evidence" value="ECO:0007669"/>
    <property type="project" value="Ensembl"/>
</dbReference>
<dbReference type="GO" id="GO:0003251">
    <property type="term" value="P:positive regulation of cell proliferation involved in heart valve morphogenesis"/>
    <property type="evidence" value="ECO:0000250"/>
    <property type="project" value="BHF-UCL"/>
</dbReference>
<dbReference type="GO" id="GO:0045893">
    <property type="term" value="P:positive regulation of DNA-templated transcription"/>
    <property type="evidence" value="ECO:0000314"/>
    <property type="project" value="UniProtKB"/>
</dbReference>
<dbReference type="GO" id="GO:0010718">
    <property type="term" value="P:positive regulation of epithelial to mesenchymal transition"/>
    <property type="evidence" value="ECO:0000250"/>
    <property type="project" value="BHF-UCL"/>
</dbReference>
<dbReference type="GO" id="GO:1901203">
    <property type="term" value="P:positive regulation of extracellular matrix assembly"/>
    <property type="evidence" value="ECO:0000315"/>
    <property type="project" value="BHF-UCL"/>
</dbReference>
<dbReference type="GO" id="GO:0046881">
    <property type="term" value="P:positive regulation of follicle-stimulating hormone secretion"/>
    <property type="evidence" value="ECO:0007669"/>
    <property type="project" value="Ensembl"/>
</dbReference>
<dbReference type="GO" id="GO:0010628">
    <property type="term" value="P:positive regulation of gene expression"/>
    <property type="evidence" value="ECO:0000315"/>
    <property type="project" value="BHF-UCL"/>
</dbReference>
<dbReference type="GO" id="GO:0033686">
    <property type="term" value="P:positive regulation of luteinizing hormone secretion"/>
    <property type="evidence" value="ECO:0007669"/>
    <property type="project" value="Ensembl"/>
</dbReference>
<dbReference type="GO" id="GO:1902895">
    <property type="term" value="P:positive regulation of miRNA transcription"/>
    <property type="evidence" value="ECO:0007669"/>
    <property type="project" value="Ensembl"/>
</dbReference>
<dbReference type="GO" id="GO:0060391">
    <property type="term" value="P:positive regulation of SMAD protein signal transduction"/>
    <property type="evidence" value="ECO:0000250"/>
    <property type="project" value="BHF-UCL"/>
</dbReference>
<dbReference type="GO" id="GO:0045944">
    <property type="term" value="P:positive regulation of transcription by RNA polymerase II"/>
    <property type="evidence" value="ECO:0000314"/>
    <property type="project" value="GO_Central"/>
</dbReference>
<dbReference type="GO" id="GO:0030511">
    <property type="term" value="P:positive regulation of transforming growth factor beta receptor signaling pathway"/>
    <property type="evidence" value="ECO:0000314"/>
    <property type="project" value="BHF-UCL"/>
</dbReference>
<dbReference type="GO" id="GO:0006355">
    <property type="term" value="P:regulation of DNA-templated transcription"/>
    <property type="evidence" value="ECO:0000303"/>
    <property type="project" value="ComplexPortal"/>
</dbReference>
<dbReference type="GO" id="GO:0051797">
    <property type="term" value="P:regulation of hair follicle development"/>
    <property type="evidence" value="ECO:0007669"/>
    <property type="project" value="Ensembl"/>
</dbReference>
<dbReference type="GO" id="GO:0006357">
    <property type="term" value="P:regulation of transcription by RNA polymerase II"/>
    <property type="evidence" value="ECO:0000318"/>
    <property type="project" value="GO_Central"/>
</dbReference>
<dbReference type="GO" id="GO:0032909">
    <property type="term" value="P:regulation of transforming growth factor beta2 production"/>
    <property type="evidence" value="ECO:0000315"/>
    <property type="project" value="BHF-UCL"/>
</dbReference>
<dbReference type="GO" id="GO:0001666">
    <property type="term" value="P:response to hypoxia"/>
    <property type="evidence" value="ECO:0000315"/>
    <property type="project" value="BHF-UCL"/>
</dbReference>
<dbReference type="GO" id="GO:0071559">
    <property type="term" value="P:response to transforming growth factor beta"/>
    <property type="evidence" value="ECO:0000314"/>
    <property type="project" value="UniProtKB"/>
</dbReference>
<dbReference type="GO" id="GO:0048733">
    <property type="term" value="P:sebaceous gland development"/>
    <property type="evidence" value="ECO:0007669"/>
    <property type="project" value="Ensembl"/>
</dbReference>
<dbReference type="GO" id="GO:0062009">
    <property type="term" value="P:secondary palate development"/>
    <property type="evidence" value="ECO:0000250"/>
    <property type="project" value="BHF-UCL"/>
</dbReference>
<dbReference type="GO" id="GO:0072520">
    <property type="term" value="P:seminiferous tubule development"/>
    <property type="evidence" value="ECO:0007669"/>
    <property type="project" value="Ensembl"/>
</dbReference>
<dbReference type="GO" id="GO:0007338">
    <property type="term" value="P:single fertilization"/>
    <property type="evidence" value="ECO:0007669"/>
    <property type="project" value="Ensembl"/>
</dbReference>
<dbReference type="GO" id="GO:0060395">
    <property type="term" value="P:SMAD protein signal transduction"/>
    <property type="evidence" value="ECO:0000314"/>
    <property type="project" value="BHF-UCL"/>
</dbReference>
<dbReference type="GO" id="GO:0032525">
    <property type="term" value="P:somite rostral/caudal axis specification"/>
    <property type="evidence" value="ECO:0007669"/>
    <property type="project" value="Ensembl"/>
</dbReference>
<dbReference type="GO" id="GO:0007283">
    <property type="term" value="P:spermatogenesis"/>
    <property type="evidence" value="ECO:0007669"/>
    <property type="project" value="Ensembl"/>
</dbReference>
<dbReference type="GO" id="GO:0006366">
    <property type="term" value="P:transcription by RNA polymerase II"/>
    <property type="evidence" value="ECO:0007669"/>
    <property type="project" value="Ensembl"/>
</dbReference>
<dbReference type="GO" id="GO:0007179">
    <property type="term" value="P:transforming growth factor beta receptor signaling pathway"/>
    <property type="evidence" value="ECO:0000314"/>
    <property type="project" value="BHF-UCL"/>
</dbReference>
<dbReference type="GO" id="GO:0060065">
    <property type="term" value="P:uterus development"/>
    <property type="evidence" value="ECO:0007669"/>
    <property type="project" value="Ensembl"/>
</dbReference>
<dbReference type="GO" id="GO:0060412">
    <property type="term" value="P:ventricular septum morphogenesis"/>
    <property type="evidence" value="ECO:0000250"/>
    <property type="project" value="BHF-UCL"/>
</dbReference>
<dbReference type="CDD" id="cd10492">
    <property type="entry name" value="MH1_SMAD_4"/>
    <property type="match status" value="1"/>
</dbReference>
<dbReference type="CDD" id="cd10498">
    <property type="entry name" value="MH2_SMAD_4"/>
    <property type="match status" value="1"/>
</dbReference>
<dbReference type="DisProt" id="DP00464"/>
<dbReference type="FunFam" id="2.60.200.10:FF:000002">
    <property type="entry name" value="Mothers against decapentaplegic homolog"/>
    <property type="match status" value="1"/>
</dbReference>
<dbReference type="FunFam" id="3.90.520.10:FF:000002">
    <property type="entry name" value="Mothers against decapentaplegic homolog"/>
    <property type="match status" value="1"/>
</dbReference>
<dbReference type="Gene3D" id="2.60.200.10">
    <property type="match status" value="1"/>
</dbReference>
<dbReference type="Gene3D" id="3.90.520.10">
    <property type="entry name" value="SMAD MH1 domain"/>
    <property type="match status" value="1"/>
</dbReference>
<dbReference type="IDEAL" id="IID00132"/>
<dbReference type="InterPro" id="IPR013790">
    <property type="entry name" value="Dwarfin"/>
</dbReference>
<dbReference type="InterPro" id="IPR003619">
    <property type="entry name" value="MAD_homology1_Dwarfin-type"/>
</dbReference>
<dbReference type="InterPro" id="IPR013019">
    <property type="entry name" value="MAD_homology_MH1"/>
</dbReference>
<dbReference type="InterPro" id="IPR017855">
    <property type="entry name" value="SMAD-like_dom_sf"/>
</dbReference>
<dbReference type="InterPro" id="IPR001132">
    <property type="entry name" value="SMAD_dom_Dwarfin-type"/>
</dbReference>
<dbReference type="InterPro" id="IPR008984">
    <property type="entry name" value="SMAD_FHA_dom_sf"/>
</dbReference>
<dbReference type="InterPro" id="IPR036578">
    <property type="entry name" value="SMAD_MH1_sf"/>
</dbReference>
<dbReference type="PANTHER" id="PTHR13703:SF63">
    <property type="entry name" value="MOTHERS AGAINST DECAPENTAPLEGIC HOMOLOG 4"/>
    <property type="match status" value="1"/>
</dbReference>
<dbReference type="PANTHER" id="PTHR13703">
    <property type="entry name" value="SMAD"/>
    <property type="match status" value="1"/>
</dbReference>
<dbReference type="Pfam" id="PF03165">
    <property type="entry name" value="MH1"/>
    <property type="match status" value="1"/>
</dbReference>
<dbReference type="Pfam" id="PF03166">
    <property type="entry name" value="MH2"/>
    <property type="match status" value="1"/>
</dbReference>
<dbReference type="SMART" id="SM00523">
    <property type="entry name" value="DWA"/>
    <property type="match status" value="1"/>
</dbReference>
<dbReference type="SMART" id="SM00524">
    <property type="entry name" value="DWB"/>
    <property type="match status" value="1"/>
</dbReference>
<dbReference type="SUPFAM" id="SSF56366">
    <property type="entry name" value="SMAD MH1 domain"/>
    <property type="match status" value="1"/>
</dbReference>
<dbReference type="SUPFAM" id="SSF49879">
    <property type="entry name" value="SMAD/FHA domain"/>
    <property type="match status" value="1"/>
</dbReference>
<dbReference type="PROSITE" id="PS51075">
    <property type="entry name" value="MH1"/>
    <property type="match status" value="1"/>
</dbReference>
<dbReference type="PROSITE" id="PS51076">
    <property type="entry name" value="MH2"/>
    <property type="match status" value="1"/>
</dbReference>
<comment type="function">
    <text evidence="1 25 33 36">In muscle physiology, plays a central role in the balance between atrophy and hypertrophy. When recruited by MSTN, promotes atrophy response via phosphorylated SMAD2/4. MSTN decrease causes SMAD4 release and subsequent recruitment by the BMP pathway to promote hypertrophy via phosphorylated SMAD1/5/8. Acts synergistically with SMAD1 and YY1 in bone morphogenetic protein (BMP)-mediated cardiac-specific gene expression. Binds to SMAD binding elements (SBEs) (5'-GTCT/AGAC-3') within BMP response element (BMPRE) of cardiac activating regions (By similarity). Common SMAD (co-SMAD) is the coactivator and mediator of signal transduction by TGF-beta (transforming growth factor). Component of the heterotrimeric SMAD2/SMAD3-SMAD4 complex that forms in the nucleus and is required for the TGF-mediated signaling (PubMed:25514493). Promotes binding of the SMAD2/SMAD4/FAST-1 complex to DNA and provides an activation function required for SMAD1 or SMAD2 to stimulate transcription. Component of the multimeric SMAD3/SMAD4/JUN/FOS complex which forms at the AP1 promoter site; required for synergistic transcriptional activity in response to TGF-beta. May act as a tumor suppressor. Positively regulates PDPK1 kinase activity by stimulating its dissociation from the 14-3-3 protein YWHAQ which acts as a negative regulator.</text>
</comment>
<comment type="subunit">
    <text evidence="2 3 7 8 9 10 11 13 14 15 16 18 19 20 21 22 24 25 26 27 31 32 33 34 37 38">Monomer; in the absence of TGF-beta activation (PubMed:9670020). Heterotrimer; on TGF-beta activation (PubMed:15799969). Heterotrimer composed of two molecules of a C-terminally phosphorylated R-SMAD molecule, SMAD2 or SMAD3, and one molecule of SMAD4 to form the transcriptional active SMAD2/SMAD3-SMAD4 complex (PubMed:15350224, PubMed:15799969). Found in a ternary complex composed of SMAD4, STK11/LKB1 and STK11IP. Found in a complex with SMAD1 and YY1 (By similarity). Identified in a complex that contains at least ZNF451, SMAD2, SMAD3 and SMAD4 (PubMed:24324267). Interacts with ATF2, COPS5, DACH1, MSG1, SKI, STK11/LKB1, STK11IP and TRIM33. Associates with ZNF423 or ZNF521 in response to BMP2 leading to activate transcription of BMP target genes. Interacts with USP9X. Interacts (via the MH1 and MH2 domains) with RBPMS. Interacts with WWTR1 (via coiled-coil domain). Interacts with CITED1 and CITED2. Interacts with PDPK1 (via PH domain) (By similarity). Interacts with VPS39; this interaction affects heterodimer formation with SMAD3, but not with SMAD2, and leads to inhibition of SMAD3-dependent transcription activation. Interactions with VPS39 and SMAD2 may be mutually exclusive. Interacts (via MH2 domain) with ZNF451 (via N-terminal zinc-finger domains) (PubMed:24324267). Interacts with ZC3H3 (By similarity). Interacts weakly with ZNF8 (PubMed:12370310). Interacts with NUP93 and IPO7; translocates SMAD4 to the nucleus through the NPC upon BMP7 stimulation resulting in activation of SMAD4 signaling (PubMed:26878725). Interacts with CREB3L1, the interaction takes place upon TGFB1 induction and SMAD4 acts as a CREB3L1 coactivator to induce the expression of genes involved in the assembly of collagen extracellular matrix (PubMed:25310401). Interacts with DLX1 (PubMed:14671321). Interacts with ZBTB7A; the interaction is direct and stimulated by TGFB1 (PubMed:25514493). Interacts with CREBBP; the recruitment of this transcriptional coactivator is negatively regulated by ZBTB7A (PubMed:25514493). Interacts with EP300; the interaction with this transcriptional coactivator is negatively regulated by ZBTB7A (PubMed:25514493). Interacts with HDAC1 (PubMed:25514493). Interacts (via MH2 domain) with ZMIZ1 (via SP-RING-type domain); in the TGF-beta signaling pathway increases the activity of the SMAD3/SMAD4 transcriptional complex (PubMed:16777850). Interacts (via N-terminus) with TSC22D1 (PubMed:15881652).</text>
</comment>
<comment type="interaction">
    <interactant intactId="EBI-347263">
        <id>Q13485</id>
    </interactant>
    <interactant intactId="EBI-77613">
        <id>P05067</id>
        <label>APP</label>
    </interactant>
    <organismsDiffer>false</organismsDiffer>
    <experiments>3</experiments>
</comment>
<comment type="interaction">
    <interactant intactId="EBI-347263">
        <id>Q13485</id>
    </interactant>
    <interactant intactId="EBI-307461">
        <id>Q9Y297</id>
        <label>BTRC</label>
    </interactant>
    <organismsDiffer>false</organismsDiffer>
    <experiments>2</experiments>
</comment>
<comment type="interaction">
    <interactant intactId="EBI-347263">
        <id>Q13485</id>
    </interactant>
    <interactant intactId="EBI-347111">
        <id>Q9UI36</id>
        <label>DACH1</label>
    </interactant>
    <organismsDiffer>false</organismsDiffer>
    <experiments>3</experiments>
</comment>
<comment type="interaction">
    <interactant intactId="EBI-347263">
        <id>Q13485</id>
    </interactant>
    <interactant intactId="EBI-374238">
        <id>Q9NPI6</id>
        <label>DCP1A</label>
    </interactant>
    <organismsDiffer>false</organismsDiffer>
    <experiments>5</experiments>
</comment>
<comment type="interaction">
    <interactant intactId="EBI-347263">
        <id>Q13485</id>
    </interactant>
    <interactant intactId="EBI-1752755">
        <id>Q92988</id>
        <label>DLX4</label>
    </interactant>
    <organismsDiffer>false</organismsDiffer>
    <experiments>5</experiments>
</comment>
<comment type="interaction">
    <interactant intactId="EBI-347263">
        <id>Q13485</id>
    </interactant>
    <interactant intactId="EBI-12130722">
        <id>P43268-3</id>
        <label>ETV4</label>
    </interactant>
    <organismsDiffer>false</organismsDiffer>
    <experiments>3</experiments>
</comment>
<comment type="interaction">
    <interactant intactId="EBI-347263">
        <id>Q13485</id>
    </interactant>
    <interactant intactId="EBI-739737">
        <id>Q01844</id>
        <label>EWSR1</label>
    </interactant>
    <organismsDiffer>false</organismsDiffer>
    <experiments>3</experiments>
</comment>
<comment type="interaction">
    <interactant intactId="EBI-347263">
        <id>Q13485</id>
    </interactant>
    <interactant intactId="EBI-1644164">
        <id>O43524</id>
        <label>FOXO3</label>
    </interactant>
    <organismsDiffer>false</organismsDiffer>
    <experiments>9</experiments>
</comment>
<comment type="interaction">
    <interactant intactId="EBI-347263">
        <id>Q13485</id>
    </interactant>
    <interactant intactId="EBI-4481939">
        <id>P98177</id>
        <label>FOXO4</label>
    </interactant>
    <organismsDiffer>false</organismsDiffer>
    <experiments>2</experiments>
</comment>
<comment type="interaction">
    <interactant intactId="EBI-347263">
        <id>Q13485</id>
    </interactant>
    <interactant intactId="EBI-2806671">
        <id>P23769</id>
        <label>GATA2</label>
    </interactant>
    <organismsDiffer>false</organismsDiffer>
    <experiments>5</experiments>
</comment>
<comment type="interaction">
    <interactant intactId="EBI-347263">
        <id>Q13485</id>
    </interactant>
    <interactant intactId="EBI-2798728">
        <id>P61968</id>
        <label>LMO4</label>
    </interactant>
    <organismsDiffer>false</organismsDiffer>
    <experiments>8</experiments>
</comment>
<comment type="interaction">
    <interactant intactId="EBI-347263">
        <id>Q13485</id>
    </interactant>
    <interactant intactId="EBI-10271199">
        <id>Q8NI38</id>
        <label>NFKBID</label>
    </interactant>
    <organismsDiffer>false</organismsDiffer>
    <experiments>3</experiments>
</comment>
<comment type="interaction">
    <interactant intactId="EBI-347263">
        <id>Q13485</id>
    </interactant>
    <interactant intactId="EBI-366978">
        <id>Q9UBE8</id>
        <label>NLK</label>
    </interactant>
    <organismsDiffer>false</organismsDiffer>
    <experiments>6</experiments>
</comment>
<comment type="interaction">
    <interactant intactId="EBI-347263">
        <id>Q13485</id>
    </interactant>
    <interactant intactId="EBI-2795198">
        <id>P24468</id>
        <label>NR2F2</label>
    </interactant>
    <organismsDiffer>false</organismsDiffer>
    <experiments>4</experiments>
</comment>
<comment type="interaction">
    <interactant intactId="EBI-347263">
        <id>Q13485</id>
    </interactant>
    <interactant intactId="EBI-367390">
        <id>Q8WWW0</id>
        <label>RASSF5</label>
    </interactant>
    <organismsDiffer>false</organismsDiffer>
    <experiments>5</experiments>
</comment>
<comment type="interaction">
    <interactant intactId="EBI-347263">
        <id>Q13485</id>
    </interactant>
    <interactant intactId="EBI-347281">
        <id>P12755</id>
        <label>SKI</label>
    </interactant>
    <organismsDiffer>false</organismsDiffer>
    <experiments>15</experiments>
</comment>
<comment type="interaction">
    <interactant intactId="EBI-347263">
        <id>Q13485</id>
    </interactant>
    <interactant intactId="EBI-2902468">
        <id>P12757</id>
        <label>SKIL</label>
    </interactant>
    <organismsDiffer>false</organismsDiffer>
    <experiments>5</experiments>
</comment>
<comment type="interaction">
    <interactant intactId="EBI-347263">
        <id>Q13485</id>
    </interactant>
    <interactant intactId="EBI-1567153">
        <id>Q15797</id>
        <label>SMAD1</label>
    </interactant>
    <organismsDiffer>false</organismsDiffer>
    <experiments>12</experiments>
</comment>
<comment type="interaction">
    <interactant intactId="EBI-347263">
        <id>Q13485</id>
    </interactant>
    <interactant intactId="EBI-1040141">
        <id>Q15796</id>
        <label>SMAD2</label>
    </interactant>
    <organismsDiffer>false</organismsDiffer>
    <experiments>24</experiments>
</comment>
<comment type="interaction">
    <interactant intactId="EBI-347263">
        <id>Q13485</id>
    </interactant>
    <interactant intactId="EBI-347161">
        <id>P84022</id>
        <label>SMAD3</label>
    </interactant>
    <organismsDiffer>false</organismsDiffer>
    <experiments>37</experiments>
</comment>
<comment type="interaction">
    <interactant intactId="EBI-347263">
        <id>Q13485</id>
    </interactant>
    <interactant intactId="EBI-347263">
        <id>Q13485</id>
        <label>SMAD4</label>
    </interactant>
    <organismsDiffer>false</organismsDiffer>
    <experiments>3</experiments>
</comment>
<comment type="interaction">
    <interactant intactId="EBI-347263">
        <id>Q13485</id>
    </interactant>
    <interactant intactId="EBI-748763">
        <id>O15198</id>
        <label>SMAD9</label>
    </interactant>
    <organismsDiffer>false</organismsDiffer>
    <experiments>4</experiments>
</comment>
<comment type="interaction">
    <interactant intactId="EBI-347263">
        <id>Q13485</id>
    </interactant>
    <interactant intactId="EBI-12273450">
        <id>O15198-2</id>
        <label>SMAD9</label>
    </interactant>
    <organismsDiffer>false</organismsDiffer>
    <experiments>3</experiments>
</comment>
<comment type="interaction">
    <interactant intactId="EBI-347263">
        <id>Q13485</id>
    </interactant>
    <interactant intactId="EBI-298336">
        <id>P08047</id>
        <label>SP1</label>
    </interactant>
    <organismsDiffer>false</organismsDiffer>
    <experiments>2</experiments>
</comment>
<comment type="interaction">
    <interactant intactId="EBI-347263">
        <id>Q13485</id>
    </interactant>
    <interactant intactId="EBI-11741437">
        <id>Q08117-2</id>
        <label>TLE5</label>
    </interactant>
    <organismsDiffer>false</organismsDiffer>
    <experiments>3</experiments>
</comment>
<comment type="interaction">
    <interactant intactId="EBI-347263">
        <id>Q13485</id>
    </interactant>
    <interactant intactId="EBI-2214398">
        <id>Q9UPN9</id>
        <label>TRIM33</label>
    </interactant>
    <organismsDiffer>false</organismsDiffer>
    <experiments>6</experiments>
</comment>
<comment type="interaction">
    <interactant intactId="EBI-347263">
        <id>Q13485</id>
    </interactant>
    <interactant intactId="EBI-80168">
        <id>P63279</id>
        <label>UBE2I</label>
    </interactant>
    <organismsDiffer>false</organismsDiffer>
    <experiments>6</experiments>
</comment>
<comment type="interaction">
    <interactant intactId="EBI-347263">
        <id>Q13485</id>
    </interactant>
    <interactant intactId="EBI-302524">
        <id>Q93008</id>
        <label>USP9X</label>
    </interactant>
    <organismsDiffer>false</organismsDiffer>
    <experiments>2</experiments>
</comment>
<comment type="interaction">
    <interactant intactId="EBI-347263">
        <id>Q13485</id>
    </interactant>
    <interactant intactId="EBI-11963196">
        <id>Q15915</id>
        <label>ZIC1</label>
    </interactant>
    <organismsDiffer>false</organismsDiffer>
    <experiments>3</experiments>
</comment>
<comment type="interaction">
    <interactant intactId="EBI-347263">
        <id>Q13485</id>
    </interactant>
    <interactant intactId="EBI-9969973">
        <id>P70056</id>
        <label>foxh1</label>
    </interactant>
    <organismsDiffer>true</organismsDiffer>
    <experiments>2</experiments>
</comment>
<comment type="interaction">
    <interactant intactId="EBI-347263">
        <id>Q13485</id>
    </interactant>
    <interactant intactId="EBI-2214043">
        <id>P70398</id>
        <label>Usp9x</label>
    </interactant>
    <organismsDiffer>true</organismsDiffer>
    <experiments>4</experiments>
</comment>
<comment type="subcellular location">
    <subcellularLocation>
        <location evidence="19 25">Cytoplasm</location>
    </subcellularLocation>
    <subcellularLocation>
        <location evidence="19">Nucleus</location>
    </subcellularLocation>
    <text evidence="19 25">Cytoplasmic in the absence of ligand. Migrates to the nucleus when complexed with R-SMAD (PubMed:15799969). PDPK1 prevents its nuclear translocation in response to TGF-beta (PubMed:17327236).</text>
</comment>
<comment type="domain">
    <text>The MH1 domain is required for DNA binding.</text>
</comment>
<comment type="domain">
    <text>The MH2 domain is required for both homomeric and heteromeric interactions and for transcriptional regulation. Sufficient for nuclear import.</text>
</comment>
<comment type="PTM">
    <text evidence="25">Phosphorylated by PDPK1.</text>
</comment>
<comment type="PTM">
    <text evidence="27">Monoubiquitinated on Lys-519 by E3 ubiquitin-protein ligase TRIM33. Monoubiquitination hampers its ability to form a stable complex with activated SMAD2/3 resulting in inhibition of TGF-beta/BMP signaling cascade. Deubiquitination by USP9X restores its competence to mediate TGF-beta signaling.</text>
</comment>
<comment type="disease" evidence="35">
    <disease id="DI-02124">
        <name>Pancreatic cancer</name>
        <acronym>PNCA</acronym>
        <description>A malignant neoplasm of the pancreas. Tumors can arise from both the exocrine and endocrine portions of the pancreas, but 95% of them develop from the exocrine portion, including the ductal epithelium, acinar cells, connective tissue, and lymphatic tissue.</description>
        <dbReference type="MIM" id="260350"/>
    </disease>
    <text>The gene represented in this entry may be involved in disease pathogenesis.</text>
</comment>
<comment type="disease" evidence="12 39">
    <disease id="DI-01854">
        <name>Juvenile polyposis syndrome</name>
        <acronym>JPS</acronym>
        <description>Autosomal dominant gastrointestinal hamartomatous polyposis syndrome in which patients are at risk for developing gastrointestinal cancers. The lesions are typified by a smooth histological appearance, predominant stroma, cystic spaces and lack of a smooth muscle core. Multiple juvenile polyps usually occur in a number of Mendelian disorders. Sometimes, these polyps occur without associated features as in JPS; here, polyps tend to occur in the large bowel and are associated with an increased risk of colon and other gastrointestinal cancers.</description>
        <dbReference type="MIM" id="174900"/>
    </disease>
    <text>The disease is caused by variants affecting the gene represented in this entry.</text>
</comment>
<comment type="disease" evidence="17">
    <disease id="DI-01855">
        <name>Juvenile polyposis/hereditary hemorrhagic telangiectasia syndrome</name>
        <acronym>JP/HHT</acronym>
        <description>JP/HHT syndrome phenotype consists of the coexistence of juvenile polyposis (JIP) and hereditary hemorrhagic telangiectasia (HHT) [MIM:187300] in a single individual. JIP and HHT are autosomal dominant disorders with distinct and non-overlapping clinical features. The former, an inherited gastrointestinal malignancy predisposition, is caused by mutations in SMAD4 or BMPR1A, and the latter is a vascular malformation disorder caused by mutations in ENG or ACVRL1. All four genes encode proteins involved in the transforming-growth-factor-signaling pathway. Although there are reports of patients and families with phenotypes of both disorders combined, the genetic etiology of this association is unknown.</description>
        <dbReference type="MIM" id="175050"/>
    </disease>
    <text>The disease is caused by variants affecting the gene represented in this entry.</text>
</comment>
<comment type="disease" evidence="23">
    <disease id="DI-01359">
        <name>Colorectal cancer</name>
        <acronym>CRC</acronym>
        <description>A complex disease characterized by malignant lesions arising from the inner wall of the large intestine (the colon) and the rectum. Genetic alterations are often associated with progression from premalignant lesion (adenoma) to invasive adenocarcinoma. Risk factors for cancer of the colon and rectum include colon polyps, long-standing ulcerative colitis, and genetic family history.</description>
        <dbReference type="MIM" id="114500"/>
    </disease>
    <text>The disease may be caused by variants affecting the gene represented in this entry.</text>
</comment>
<comment type="disease">
    <text evidence="28">SMAD4 variants may be associated with susceptibility to pulmonary hypertension, a disorder characterized by plexiform lesions of proliferating endothelial cells in pulmonary arterioles. The lesions lead to elevated pulmonary arterial pression, right ventricular failure, and death. The disease can occur from infancy throughout life and it has a mean age at onset of 36 years. Penetrance is reduced. Although familial pulmonary hypertension is rare, cases secondary to known etiologies are more common and include those associated with the appetite-suppressant drugs.</text>
</comment>
<comment type="disease" evidence="29 30">
    <disease id="DI-03349">
        <name>Myhre syndrome</name>
        <acronym>MYHRS</acronym>
        <description>An autosomal dominant syndrome characterized by pre- and postnatal growth deficiency, intellectual disability, generalized muscle hypertrophy and striking muscular build, decreased joint mobility, cryptorchidism, and unusual facies. Dysmorphic facial features include microcephaly, midface hypoplasia, prognathism, and blepharophimosis. Typical skeletal anomalies are short stature, square body shape, broad ribs, iliac hypoplasia, brachydactyly, flattened vertebrae, and thickened calvaria. Other features, such as congenital heart disease, may also occur.</description>
        <dbReference type="MIM" id="139210"/>
    </disease>
    <text>The disease is caused by variants affecting the gene represented in this entry.</text>
</comment>
<comment type="similarity">
    <text evidence="40">Belongs to the dwarfin/SMAD family.</text>
</comment>
<comment type="online information" name="Atlas of Genetics and Cytogenetics in Oncology and Haematology">
    <link uri="https://atlasgeneticsoncology.org/gene/371/SMAD4"/>
</comment>
<comment type="online information" name="Mendelian genes SMAD family member 4 (SMAD4)">
    <link uri="https://databases.lovd.nl/shared/genes/SMAD4"/>
    <text>Leiden Open Variation Database (LOVD)</text>
</comment>
<organism>
    <name type="scientific">Homo sapiens</name>
    <name type="common">Human</name>
    <dbReference type="NCBI Taxonomy" id="9606"/>
    <lineage>
        <taxon>Eukaryota</taxon>
        <taxon>Metazoa</taxon>
        <taxon>Chordata</taxon>
        <taxon>Craniata</taxon>
        <taxon>Vertebrata</taxon>
        <taxon>Euteleostomi</taxon>
        <taxon>Mammalia</taxon>
        <taxon>Eutheria</taxon>
        <taxon>Euarchontoglires</taxon>
        <taxon>Primates</taxon>
        <taxon>Haplorrhini</taxon>
        <taxon>Catarrhini</taxon>
        <taxon>Hominidae</taxon>
        <taxon>Homo</taxon>
    </lineage>
</organism>
<sequence length="552" mass="60439">MDNMSITNTPTSNDACLSIVHSLMCHRQGGESETFAKRAIESLVKKLKEKKDELDSLITAITTNGAHPSKCVTIQRTLDGRLQVAGRKGFPHVIYARLWRWPDLHKNELKHVKYCQYAFDLKCDSVCVNPYHYERVVSPGIDLSGLTLQSNAPSSMMVKDEYVHDFEGQPSLSTEGHSIQTIQHPPSNRASTETYSTPALLAPSESNATSTANFPNIPVASTSQPASILGGSHSEGLLQIASGPQPGQQQNGFTGQPATYHHNSTTTWTGSRTAPYTPNLPHHQNGHLQHHPPMPPHPGHYWPVHNELAFQPPISNHPAPEYWCSIAYFEMDVQVGETFKVPSSCPIVTVDGYVDPSGGDRFCLGQLSNVHRTEAIERARLHIGKGVQLECKGEGDVWVRCLSDHAVFVQSYYLDREAGRAPGDAVHKIYPSAYIKVFDLRQCHRQMQQQAATAQAAAAAQAAAVAGNIPGPGSVGGIAPAISLSAAAGIGVDDLRRLCILRMSFVKGWGPDYPRQSIKETPCWIEIHLHRALQLLDEVLHTMPIADPQPLD</sequence>
<accession>Q13485</accession>
<accession>A8K405</accession>
<evidence type="ECO:0000250" key="1"/>
<evidence type="ECO:0000250" key="2">
    <source>
        <dbReference type="UniProtKB" id="O70437"/>
    </source>
</evidence>
<evidence type="ECO:0000250" key="3">
    <source>
        <dbReference type="UniProtKB" id="P97471"/>
    </source>
</evidence>
<evidence type="ECO:0000255" key="4">
    <source>
        <dbReference type="PROSITE-ProRule" id="PRU00438"/>
    </source>
</evidence>
<evidence type="ECO:0000255" key="5">
    <source>
        <dbReference type="PROSITE-ProRule" id="PRU00439"/>
    </source>
</evidence>
<evidence type="ECO:0000256" key="6">
    <source>
        <dbReference type="SAM" id="MobiDB-lite"/>
    </source>
</evidence>
<evidence type="ECO:0000269" key="7">
    <source>
    </source>
</evidence>
<evidence type="ECO:0000269" key="8">
    <source>
    </source>
</evidence>
<evidence type="ECO:0000269" key="9">
    <source>
    </source>
</evidence>
<evidence type="ECO:0000269" key="10">
    <source>
    </source>
</evidence>
<evidence type="ECO:0000269" key="11">
    <source>
    </source>
</evidence>
<evidence type="ECO:0000269" key="12">
    <source>
    </source>
</evidence>
<evidence type="ECO:0000269" key="13">
    <source>
    </source>
</evidence>
<evidence type="ECO:0000269" key="14">
    <source>
    </source>
</evidence>
<evidence type="ECO:0000269" key="15">
    <source>
    </source>
</evidence>
<evidence type="ECO:0000269" key="16">
    <source>
    </source>
</evidence>
<evidence type="ECO:0000269" key="17">
    <source>
    </source>
</evidence>
<evidence type="ECO:0000269" key="18">
    <source>
    </source>
</evidence>
<evidence type="ECO:0000269" key="19">
    <source>
    </source>
</evidence>
<evidence type="ECO:0000269" key="20">
    <source>
    </source>
</evidence>
<evidence type="ECO:0000269" key="21">
    <source>
    </source>
</evidence>
<evidence type="ECO:0000269" key="22">
    <source>
    </source>
</evidence>
<evidence type="ECO:0000269" key="23">
    <source>
    </source>
</evidence>
<evidence type="ECO:0000269" key="24">
    <source>
    </source>
</evidence>
<evidence type="ECO:0000269" key="25">
    <source>
    </source>
</evidence>
<evidence type="ECO:0000269" key="26">
    <source>
    </source>
</evidence>
<evidence type="ECO:0000269" key="27">
    <source>
    </source>
</evidence>
<evidence type="ECO:0000269" key="28">
    <source>
    </source>
</evidence>
<evidence type="ECO:0000269" key="29">
    <source>
    </source>
</evidence>
<evidence type="ECO:0000269" key="30">
    <source>
    </source>
</evidence>
<evidence type="ECO:0000269" key="31">
    <source>
    </source>
</evidence>
<evidence type="ECO:0000269" key="32">
    <source>
    </source>
</evidence>
<evidence type="ECO:0000269" key="33">
    <source>
    </source>
</evidence>
<evidence type="ECO:0000269" key="34">
    <source>
    </source>
</evidence>
<evidence type="ECO:0000269" key="35">
    <source>
    </source>
</evidence>
<evidence type="ECO:0000269" key="36">
    <source>
    </source>
</evidence>
<evidence type="ECO:0000269" key="37">
    <source>
    </source>
</evidence>
<evidence type="ECO:0000269" key="38">
    <source>
    </source>
</evidence>
<evidence type="ECO:0000269" key="39">
    <source>
    </source>
</evidence>
<evidence type="ECO:0000305" key="40"/>
<evidence type="ECO:0007744" key="41">
    <source>
    </source>
</evidence>
<evidence type="ECO:0007744" key="42">
    <source>
    </source>
</evidence>
<evidence type="ECO:0007744" key="43">
    <source>
    </source>
</evidence>
<evidence type="ECO:0007744" key="44">
    <source>
    </source>
</evidence>
<evidence type="ECO:0007829" key="45">
    <source>
        <dbReference type="PDB" id="1DD1"/>
    </source>
</evidence>
<evidence type="ECO:0007829" key="46">
    <source>
        <dbReference type="PDB" id="1U7F"/>
    </source>
</evidence>
<evidence type="ECO:0007829" key="47">
    <source>
        <dbReference type="PDB" id="1YGS"/>
    </source>
</evidence>
<evidence type="ECO:0007829" key="48">
    <source>
        <dbReference type="PDB" id="5MEY"/>
    </source>
</evidence>
<evidence type="ECO:0007829" key="49">
    <source>
        <dbReference type="PDB" id="5UWU"/>
    </source>
</evidence>
<gene>
    <name type="primary">SMAD4</name>
    <name type="synonym">DPC4</name>
    <name type="synonym">MADH4</name>
</gene>
<name>SMAD4_HUMAN</name>
<reference key="1">
    <citation type="journal article" date="1996" name="Science">
        <title>DPC4, a candidate tumor suppressor gene at human chromosome 18q21.1.</title>
        <authorList>
            <person name="Hahn S.A."/>
            <person name="Schutte M."/>
            <person name="Shamsul Hoque A.T.M."/>
            <person name="Moskaluk C.A."/>
            <person name="da Costa L.T."/>
            <person name="Rozenblum E."/>
            <person name="Weinstein C.L."/>
            <person name="Fischer A."/>
            <person name="Yeo C.J."/>
            <person name="Hruban R.H."/>
            <person name="Kern S.E."/>
        </authorList>
    </citation>
    <scope>NUCLEOTIDE SEQUENCE [GENOMIC DNA / MRNA]</scope>
    <scope>VARIANT PANCREATIC CARCINOMA HIS-493</scope>
    <source>
        <tissue>Fetal brain</tissue>
    </source>
</reference>
<reference key="2">
    <citation type="journal article" date="1996" name="Nature">
        <title>Receptor-associated Mad homologues synergize as effectors of the TGF-beta response.</title>
        <authorList>
            <person name="Zhang Y."/>
            <person name="Feng X.-H."/>
            <person name="Wu R.-Y."/>
            <person name="Derynck R."/>
        </authorList>
    </citation>
    <scope>NUCLEOTIDE SEQUENCE [GENOMIC DNA]</scope>
    <source>
        <tissue>Placenta</tissue>
    </source>
</reference>
<reference key="3">
    <citation type="journal article" date="1997" name="Diagn. Mol. Pathol.">
        <title>Genomic sequencing of DPC4 in the analysis of familial pancreatic carcinoma.</title>
        <authorList>
            <person name="Moskaluk C.A."/>
            <person name="Hruban R.H."/>
            <person name="Schutte M."/>
            <person name="Lietman A.S."/>
            <person name="Smyrk T."/>
            <person name="Fusaro L."/>
            <person name="Fusaro R."/>
            <person name="Lynch J."/>
            <person name="Yeo C.J."/>
            <person name="Jackson C.E."/>
            <person name="Lynch H.T."/>
            <person name="Kern S.E."/>
        </authorList>
    </citation>
    <scope>NUCLEOTIDE SEQUENCE [GENOMIC DNA]</scope>
</reference>
<reference key="4">
    <citation type="journal article" date="2004" name="Nat. Genet.">
        <title>Complete sequencing and characterization of 21,243 full-length human cDNAs.</title>
        <authorList>
            <person name="Ota T."/>
            <person name="Suzuki Y."/>
            <person name="Nishikawa T."/>
            <person name="Otsuki T."/>
            <person name="Sugiyama T."/>
            <person name="Irie R."/>
            <person name="Wakamatsu A."/>
            <person name="Hayashi K."/>
            <person name="Sato H."/>
            <person name="Nagai K."/>
            <person name="Kimura K."/>
            <person name="Makita H."/>
            <person name="Sekine M."/>
            <person name="Obayashi M."/>
            <person name="Nishi T."/>
            <person name="Shibahara T."/>
            <person name="Tanaka T."/>
            <person name="Ishii S."/>
            <person name="Yamamoto J."/>
            <person name="Saito K."/>
            <person name="Kawai Y."/>
            <person name="Isono Y."/>
            <person name="Nakamura Y."/>
            <person name="Nagahari K."/>
            <person name="Murakami K."/>
            <person name="Yasuda T."/>
            <person name="Iwayanagi T."/>
            <person name="Wagatsuma M."/>
            <person name="Shiratori A."/>
            <person name="Sudo H."/>
            <person name="Hosoiri T."/>
            <person name="Kaku Y."/>
            <person name="Kodaira H."/>
            <person name="Kondo H."/>
            <person name="Sugawara M."/>
            <person name="Takahashi M."/>
            <person name="Kanda K."/>
            <person name="Yokoi T."/>
            <person name="Furuya T."/>
            <person name="Kikkawa E."/>
            <person name="Omura Y."/>
            <person name="Abe K."/>
            <person name="Kamihara K."/>
            <person name="Katsuta N."/>
            <person name="Sato K."/>
            <person name="Tanikawa M."/>
            <person name="Yamazaki M."/>
            <person name="Ninomiya K."/>
            <person name="Ishibashi T."/>
            <person name="Yamashita H."/>
            <person name="Murakawa K."/>
            <person name="Fujimori K."/>
            <person name="Tanai H."/>
            <person name="Kimata M."/>
            <person name="Watanabe M."/>
            <person name="Hiraoka S."/>
            <person name="Chiba Y."/>
            <person name="Ishida S."/>
            <person name="Ono Y."/>
            <person name="Takiguchi S."/>
            <person name="Watanabe S."/>
            <person name="Yosida M."/>
            <person name="Hotuta T."/>
            <person name="Kusano J."/>
            <person name="Kanehori K."/>
            <person name="Takahashi-Fujii A."/>
            <person name="Hara H."/>
            <person name="Tanase T.-O."/>
            <person name="Nomura Y."/>
            <person name="Togiya S."/>
            <person name="Komai F."/>
            <person name="Hara R."/>
            <person name="Takeuchi K."/>
            <person name="Arita M."/>
            <person name="Imose N."/>
            <person name="Musashino K."/>
            <person name="Yuuki H."/>
            <person name="Oshima A."/>
            <person name="Sasaki N."/>
            <person name="Aotsuka S."/>
            <person name="Yoshikawa Y."/>
            <person name="Matsunawa H."/>
            <person name="Ichihara T."/>
            <person name="Shiohata N."/>
            <person name="Sano S."/>
            <person name="Moriya S."/>
            <person name="Momiyama H."/>
            <person name="Satoh N."/>
            <person name="Takami S."/>
            <person name="Terashima Y."/>
            <person name="Suzuki O."/>
            <person name="Nakagawa S."/>
            <person name="Senoh A."/>
            <person name="Mizoguchi H."/>
            <person name="Goto Y."/>
            <person name="Shimizu F."/>
            <person name="Wakebe H."/>
            <person name="Hishigaki H."/>
            <person name="Watanabe T."/>
            <person name="Sugiyama A."/>
            <person name="Takemoto M."/>
            <person name="Kawakami B."/>
            <person name="Yamazaki M."/>
            <person name="Watanabe K."/>
            <person name="Kumagai A."/>
            <person name="Itakura S."/>
            <person name="Fukuzumi Y."/>
            <person name="Fujimori Y."/>
            <person name="Komiyama M."/>
            <person name="Tashiro H."/>
            <person name="Tanigami A."/>
            <person name="Fujiwara T."/>
            <person name="Ono T."/>
            <person name="Yamada K."/>
            <person name="Fujii Y."/>
            <person name="Ozaki K."/>
            <person name="Hirao M."/>
            <person name="Ohmori Y."/>
            <person name="Kawabata A."/>
            <person name="Hikiji T."/>
            <person name="Kobatake N."/>
            <person name="Inagaki H."/>
            <person name="Ikema Y."/>
            <person name="Okamoto S."/>
            <person name="Okitani R."/>
            <person name="Kawakami T."/>
            <person name="Noguchi S."/>
            <person name="Itoh T."/>
            <person name="Shigeta K."/>
            <person name="Senba T."/>
            <person name="Matsumura K."/>
            <person name="Nakajima Y."/>
            <person name="Mizuno T."/>
            <person name="Morinaga M."/>
            <person name="Sasaki M."/>
            <person name="Togashi T."/>
            <person name="Oyama M."/>
            <person name="Hata H."/>
            <person name="Watanabe M."/>
            <person name="Komatsu T."/>
            <person name="Mizushima-Sugano J."/>
            <person name="Satoh T."/>
            <person name="Shirai Y."/>
            <person name="Takahashi Y."/>
            <person name="Nakagawa K."/>
            <person name="Okumura K."/>
            <person name="Nagase T."/>
            <person name="Nomura N."/>
            <person name="Kikuchi H."/>
            <person name="Masuho Y."/>
            <person name="Yamashita R."/>
            <person name="Nakai K."/>
            <person name="Yada T."/>
            <person name="Nakamura Y."/>
            <person name="Ohara O."/>
            <person name="Isogai T."/>
            <person name="Sugano S."/>
        </authorList>
    </citation>
    <scope>NUCLEOTIDE SEQUENCE [LARGE SCALE MRNA]</scope>
</reference>
<reference key="5">
    <citation type="submission" date="2005-07" db="EMBL/GenBank/DDBJ databases">
        <authorList>
            <person name="Mural R.J."/>
            <person name="Istrail S."/>
            <person name="Sutton G.G."/>
            <person name="Florea L."/>
            <person name="Halpern A.L."/>
            <person name="Mobarry C.M."/>
            <person name="Lippert R."/>
            <person name="Walenz B."/>
            <person name="Shatkay H."/>
            <person name="Dew I."/>
            <person name="Miller J.R."/>
            <person name="Flanigan M.J."/>
            <person name="Edwards N.J."/>
            <person name="Bolanos R."/>
            <person name="Fasulo D."/>
            <person name="Halldorsson B.V."/>
            <person name="Hannenhalli S."/>
            <person name="Turner R."/>
            <person name="Yooseph S."/>
            <person name="Lu F."/>
            <person name="Nusskern D.R."/>
            <person name="Shue B.C."/>
            <person name="Zheng X.H."/>
            <person name="Zhong F."/>
            <person name="Delcher A.L."/>
            <person name="Huson D.H."/>
            <person name="Kravitz S.A."/>
            <person name="Mouchard L."/>
            <person name="Reinert K."/>
            <person name="Remington K.A."/>
            <person name="Clark A.G."/>
            <person name="Waterman M.S."/>
            <person name="Eichler E.E."/>
            <person name="Adams M.D."/>
            <person name="Hunkapiller M.W."/>
            <person name="Myers E.W."/>
            <person name="Venter J.C."/>
        </authorList>
    </citation>
    <scope>NUCLEOTIDE SEQUENCE [LARGE SCALE GENOMIC DNA]</scope>
</reference>
<reference key="6">
    <citation type="journal article" date="2004" name="Genome Res.">
        <title>The status, quality, and expansion of the NIH full-length cDNA project: the Mammalian Gene Collection (MGC).</title>
        <authorList>
            <consortium name="The MGC Project Team"/>
        </authorList>
    </citation>
    <scope>NUCLEOTIDE SEQUENCE [LARGE SCALE MRNA]</scope>
    <source>
        <tissue>Muscle</tissue>
    </source>
</reference>
<reference key="7">
    <citation type="journal article" date="1997" name="Genes Dev.">
        <title>Dual role of the Smad4/DPC4 tumor suppressor in TGFbeta-inducible transcriptional complexes.</title>
        <authorList>
            <person name="Liu F."/>
            <person name="Pouponnot C."/>
            <person name="Massague J."/>
        </authorList>
    </citation>
    <scope>FUNCTION</scope>
</reference>
<reference key="8">
    <citation type="journal article" date="1998" name="EMBO J.">
        <title>Smad proteins exist as monomers in vivo and undergo homo- and hetero-oligomerization upon activation by serine/threonine kinase receptors.</title>
        <authorList>
            <person name="Kawabata M."/>
            <person name="Inoue H."/>
            <person name="Hanyu A."/>
            <person name="Imamura T."/>
            <person name="Miyazono K."/>
        </authorList>
    </citation>
    <scope>SUBUNIT</scope>
</reference>
<reference key="9">
    <citation type="journal article" date="1998" name="Proc. Natl. Acad. Sci. U.S.A.">
        <title>Transcriptional activating activity of Smad4: roles of SMAD hetero-oligomerization and enhancement by an associating transactivator.</title>
        <authorList>
            <person name="Shioda T."/>
            <person name="Lechleider R.J."/>
            <person name="Dunwoodie S.L."/>
            <person name="Li H."/>
            <person name="Yahata T."/>
            <person name="de Caestecker M.P."/>
            <person name="Fenner M.H."/>
            <person name="Roberts A.B."/>
            <person name="Isselbacher K.J."/>
        </authorList>
    </citation>
    <scope>INTERACTION WITH CITED1</scope>
</reference>
<reference key="10">
    <citation type="journal article" date="2000" name="Cell">
        <title>OAZ uses distinct DNA- and protein-binding zinc fingers in separate BMP-Smad and Olf signaling pathways.</title>
        <authorList>
            <person name="Hata A."/>
            <person name="Seoane J."/>
            <person name="Lagna G."/>
            <person name="Montalvo E."/>
            <person name="Hemmati-Brivanlou A."/>
            <person name="Massague J."/>
        </authorList>
    </citation>
    <scope>INTERACTION WITH ZNF423</scope>
</reference>
<reference key="11">
    <citation type="journal article" date="2000" name="J. Biol. Chem.">
        <title>The Smad4 activation domain (SAD) is a proline-rich, p300-dependent transcriptional activation domain.</title>
        <authorList>
            <person name="de Caestecker M.P."/>
            <person name="Yahata T."/>
            <person name="Wang D."/>
            <person name="Parks W.T."/>
            <person name="Huang S."/>
            <person name="Hill C.S."/>
            <person name="Shioda T."/>
            <person name="Roberts A.B."/>
            <person name="Lechleider R.J."/>
        </authorList>
    </citation>
    <scope>CHARACTERIZATION OF SAD DOMAIN</scope>
</reference>
<reference key="12">
    <citation type="journal article" date="2001" name="Hum. Mol. Genet.">
        <title>LIP1, a cytoplasmic protein functionally linked to the Peutz-Jeghers syndrome kinase LKB1.</title>
        <authorList>
            <person name="Smith D.P."/>
            <person name="Rayter S.I."/>
            <person name="Niederlander C."/>
            <person name="Spicer J."/>
            <person name="Jones C.M."/>
            <person name="Ashworth A."/>
        </authorList>
    </citation>
    <scope>IDENTIFICATION IN A TERNARY COMPLEX COMPOSED OF STK11/LKB1 AND STK11IP</scope>
    <scope>INTERACTION WITH STK11/LKB1 AND STK11IP</scope>
</reference>
<reference key="13">
    <citation type="journal article" date="2002" name="EMBO Rep.">
        <title>Jab1 antagonizes TGF-beta signaling by inducing Smad4 degradation.</title>
        <authorList>
            <person name="Wan M."/>
            <person name="Cao X."/>
            <person name="Wu Y."/>
            <person name="Bai S."/>
            <person name="Wu L."/>
            <person name="Shi X."/>
            <person name="Wang N."/>
            <person name="Cao X."/>
        </authorList>
    </citation>
    <scope>INTERACTION WITH COPS5</scope>
</reference>
<reference key="14">
    <citation type="journal article" date="2002" name="Mol. Cell. Biol.">
        <title>Identification of mZnf8, a mouse Kruppel-like transcriptional repressor, as a novel nuclear interaction partner of Smad1.</title>
        <authorList>
            <person name="Jiao K."/>
            <person name="Zhou Y."/>
            <person name="Hogan B.L.M."/>
        </authorList>
    </citation>
    <scope>INTERACTION WITH ZNF8</scope>
</reference>
<reference key="15">
    <citation type="journal article" date="2003" name="EMBO J.">
        <title>TLP, a novel modulator of TGF-beta signaling, has opposite effects on Smad2- and Smad3-dependent signaling.</title>
        <authorList>
            <person name="Felici A."/>
            <person name="Wurthner J.U."/>
            <person name="Parks W.T."/>
            <person name="Giam L.R."/>
            <person name="Reiss M."/>
            <person name="Karpova T.S."/>
            <person name="McNally J.G."/>
            <person name="Roberts A.B."/>
        </authorList>
    </citation>
    <scope>INTERACTION WITH VPS39</scope>
</reference>
<reference key="16">
    <citation type="journal article" date="2003" name="J. Biol. Chem.">
        <title>DACH1 inhibits transforming growth factor-beta signaling through binding Smad4.</title>
        <authorList>
            <person name="Wu K."/>
            <person name="Yang Y."/>
            <person name="Wang C."/>
            <person name="Davoli M.A."/>
            <person name="D'Amico M."/>
            <person name="Li A."/>
            <person name="Cveklova K."/>
            <person name="Kozmik Z."/>
            <person name="Lisanti M.P."/>
            <person name="Russell R.G."/>
            <person name="Cvekl A."/>
            <person name="Pestell R.G."/>
        </authorList>
    </citation>
    <scope>INTERACTION WITH DACH1</scope>
</reference>
<reference key="17">
    <citation type="journal article" date="2003" name="Proc. Natl. Acad. Sci. U.S.A.">
        <title>Homeoprotein DLX-1 interacts with Smad4 and blocks a signaling pathway from activin A in hematopoietic cells.</title>
        <authorList>
            <person name="Chiba S."/>
            <person name="Takeshita K."/>
            <person name="Imai Y."/>
            <person name="Kumano K."/>
            <person name="Kurokawa M."/>
            <person name="Masuda S."/>
            <person name="Shimizu K."/>
            <person name="Nakamura S."/>
            <person name="Ruddle F.H."/>
            <person name="Hirai H."/>
        </authorList>
    </citation>
    <scope>INTERACTION WITH DLX1</scope>
</reference>
<reference key="18">
    <citation type="journal article" date="2004" name="Blood">
        <title>Early hematopoietic zinc finger protein (EHZF), the human homolog to mouse Evi3, is highly expressed in primitive human hematopoietic cells.</title>
        <authorList>
            <person name="Bond H.M."/>
            <person name="Mesuraca M."/>
            <person name="Carbone E."/>
            <person name="Bonelli P."/>
            <person name="Agosti V."/>
            <person name="Amodio N."/>
            <person name="De Rosa G."/>
            <person name="Di Nicola M."/>
            <person name="Gianni A.M."/>
            <person name="Moore M.A."/>
            <person name="Hata A."/>
            <person name="Grieco M."/>
            <person name="Morrone G."/>
            <person name="Venuta S."/>
        </authorList>
    </citation>
    <scope>INTERACTION WITH ZNF521</scope>
</reference>
<reference key="19">
    <citation type="journal article" date="2005" name="Cell">
        <title>Germ-layer specification and control of cell growth by Ectodermin, a Smad4 ubiquitin ligase.</title>
        <authorList>
            <person name="Dupont S."/>
            <person name="Zacchigna L."/>
            <person name="Cordenonsi M."/>
            <person name="Soligo S."/>
            <person name="Adorno M."/>
            <person name="Rugge M."/>
            <person name="Piccolo S."/>
        </authorList>
    </citation>
    <scope>INTERACTION WITH TRIM33</scope>
</reference>
<reference key="20">
    <citation type="journal article" date="2005" name="J. Biol. Chem.">
        <title>Nuclear targeting of transforming growth factor-beta-activated Smad complexes.</title>
        <authorList>
            <person name="Chen H.B."/>
            <person name="Rud J.G."/>
            <person name="Lin K."/>
            <person name="Xu L."/>
        </authorList>
    </citation>
    <scope>SUBUNIT</scope>
    <scope>SUBCELLULAR LOCATION</scope>
</reference>
<reference key="21">
    <citation type="journal article" date="2005" name="Mol. Cell. Biochem.">
        <title>Tsc-22 enhances TGF-beta signaling by associating with Smad4 and induces erythroid cell differentiation.</title>
        <authorList>
            <person name="Choi S.J."/>
            <person name="Moon J.H."/>
            <person name="Ahn Y.W."/>
            <person name="Ahn J.H."/>
            <person name="Kim D.U."/>
            <person name="Han T.H."/>
        </authorList>
    </citation>
    <scope>INTERACTION WITH TSC22D1</scope>
</reference>
<reference key="22">
    <citation type="journal article" date="2006" name="J. Biol. Chem.">
        <title>The novel PIAS-like protein hZimp10 enhances Smad transcriptional activity.</title>
        <authorList>
            <person name="Li X."/>
            <person name="Thyssen G."/>
            <person name="Beliakoff J."/>
            <person name="Sun Z."/>
        </authorList>
    </citation>
    <scope>INTERACTION WITH ZMIZ1</scope>
</reference>
<reference key="23">
    <citation type="journal article" date="2006" name="Nucleic Acids Res.">
        <title>Potentiation of Smad-mediated transcriptional activation by the RNA-binding protein RBPMS.</title>
        <authorList>
            <person name="Sun Y."/>
            <person name="Ding L."/>
            <person name="Zhang H."/>
            <person name="Han J."/>
            <person name="Yang X."/>
            <person name="Yan J."/>
            <person name="Zhu Y."/>
            <person name="Li J."/>
            <person name="Song H."/>
            <person name="Ye Q."/>
        </authorList>
    </citation>
    <scope>INTERACTION WITH RBPMS</scope>
</reference>
<reference key="24">
    <citation type="journal article" date="2007" name="J. Biol. Chem.">
        <title>3-Phosphoinositide-dependent PDK1 negatively regulates transforming growth factor-beta-induced signaling in a kinase-dependent manner through physical interaction with Smad proteins.</title>
        <authorList>
            <person name="Seong H.A."/>
            <person name="Jung H."/>
            <person name="Kim K.T."/>
            <person name="Ha H."/>
        </authorList>
    </citation>
    <scope>FUNCTION</scope>
    <scope>SUBCELLULAR LOCATION</scope>
    <scope>PHOSPHORYLATION BY PDPK1</scope>
    <scope>INTERACTION WITH PDPK1</scope>
</reference>
<reference key="25">
    <citation type="journal article" date="2008" name="Nat. Cell Biol.">
        <title>TAZ controls Smad nucleocytoplasmic shuttling and regulates human embryonic stem-cell self-renewal.</title>
        <authorList>
            <person name="Varelas X."/>
            <person name="Sakuma R."/>
            <person name="Samavarchi-Tehrani P."/>
            <person name="Peerani R."/>
            <person name="Rao B.M."/>
            <person name="Dembowy J."/>
            <person name="Yaffe M.B."/>
            <person name="Zandstra P.W."/>
            <person name="Wrana J.L."/>
        </authorList>
    </citation>
    <scope>INTERACTION WITH WWTR1</scope>
</reference>
<reference key="26">
    <citation type="journal article" date="2009" name="Cell">
        <title>FAM/USP9x, a deubiquitinating enzyme essential for TGFbeta signaling, controls Smad4 monoubiquitination.</title>
        <authorList>
            <person name="Dupont S."/>
            <person name="Mamidi A."/>
            <person name="Cordenonsi M."/>
            <person name="Montagner M."/>
            <person name="Zacchigna L."/>
            <person name="Adorno M."/>
            <person name="Martello G."/>
            <person name="Stinchfield M.J."/>
            <person name="Soligo S."/>
            <person name="Morsut L."/>
            <person name="Inui M."/>
            <person name="Moro S."/>
            <person name="Modena N."/>
            <person name="Argenton F."/>
            <person name="Newfeld S.J."/>
            <person name="Piccolo S."/>
        </authorList>
    </citation>
    <scope>INTERACTION WITH USP9X</scope>
    <scope>UBIQUITINATION</scope>
    <scope>MUTAGENESIS OF LYS-519</scope>
</reference>
<reference key="27">
    <citation type="journal article" date="2009" name="Science">
        <title>Lysine acetylation targets protein complexes and co-regulates major cellular functions.</title>
        <authorList>
            <person name="Choudhary C."/>
            <person name="Kumar C."/>
            <person name="Gnad F."/>
            <person name="Nielsen M.L."/>
            <person name="Rehman M."/>
            <person name="Walther T.C."/>
            <person name="Olsen J.V."/>
            <person name="Mann M."/>
        </authorList>
    </citation>
    <scope>ACETYLATION [LARGE SCALE ANALYSIS] AT LYS-37; LYS-428 AND LYS-507</scope>
    <scope>IDENTIFICATION BY MASS SPECTROMETRY [LARGE SCALE ANALYSIS]</scope>
</reference>
<reference key="28">
    <citation type="journal article" date="2011" name="BMC Syst. Biol.">
        <title>Initial characterization of the human central proteome.</title>
        <authorList>
            <person name="Burkard T.R."/>
            <person name="Planyavsky M."/>
            <person name="Kaupe I."/>
            <person name="Breitwieser F.P."/>
            <person name="Buerckstuemmer T."/>
            <person name="Bennett K.L."/>
            <person name="Superti-Furga G."/>
            <person name="Colinge J."/>
        </authorList>
    </citation>
    <scope>IDENTIFICATION BY MASS SPECTROMETRY [LARGE SCALE ANALYSIS]</scope>
</reference>
<reference key="29">
    <citation type="journal article" date="2011" name="Hum. Mutat.">
        <title>Molecular genetic characterization of SMAD signaling molecules in pulmonary arterial hypertension.</title>
        <authorList>
            <person name="Nasim M.T."/>
            <person name="Ogo T."/>
            <person name="Ahmed M."/>
            <person name="Randall R."/>
            <person name="Chowdhury H.M."/>
            <person name="Snape K.M."/>
            <person name="Bradshaw T.Y."/>
            <person name="Southgate L."/>
            <person name="Lee G.J."/>
            <person name="Jackson I."/>
            <person name="Lord G.M."/>
            <person name="Gibbs J.S."/>
            <person name="Wilkins M.R."/>
            <person name="Ohta-Ogo K."/>
            <person name="Nakamura K."/>
            <person name="Girerd B."/>
            <person name="Coulet F."/>
            <person name="Soubrier F."/>
            <person name="Humbert M."/>
            <person name="Morrell N.W."/>
            <person name="Trembath R.C."/>
            <person name="Machado R.D."/>
        </authorList>
    </citation>
    <scope>POSSIBLE INVOLVEMENT IN PULMONARY HYPERTENSION</scope>
    <scope>VARIANT SER-13</scope>
</reference>
<reference key="30">
    <citation type="journal article" date="2014" name="J. Biol. Chem.">
        <title>Zinc finger protein 451 is a novel Smad corepressor in transforming growth factor-beta signaling.</title>
        <authorList>
            <person name="Feng Y."/>
            <person name="Wu H."/>
            <person name="Xu Y."/>
            <person name="Zhang Z."/>
            <person name="Liu T."/>
            <person name="Lin X."/>
            <person name="Feng X.H."/>
        </authorList>
    </citation>
    <scope>INTERACTION WITH ZNF451</scope>
    <scope>IDENTIFICATION IN A COMPLEX WITH ZNF451; SMAD3 AND SMAD2</scope>
    <scope>SUBUNIT</scope>
</reference>
<reference key="31">
    <citation type="journal article" date="2014" name="J. Proteomics">
        <title>An enzyme assisted RP-RPLC approach for in-depth analysis of human liver phosphoproteome.</title>
        <authorList>
            <person name="Bian Y."/>
            <person name="Song C."/>
            <person name="Cheng K."/>
            <person name="Dong M."/>
            <person name="Wang F."/>
            <person name="Huang J."/>
            <person name="Sun D."/>
            <person name="Wang L."/>
            <person name="Ye M."/>
            <person name="Zou H."/>
        </authorList>
    </citation>
    <scope>IDENTIFICATION BY MASS SPECTROMETRY [LARGE SCALE ANALYSIS]</scope>
    <source>
        <tissue>Liver</tissue>
    </source>
</reference>
<reference key="32">
    <citation type="journal article" date="2014" name="Nat. Struct. Mol. Biol.">
        <title>Uncovering global SUMOylation signaling networks in a site-specific manner.</title>
        <authorList>
            <person name="Hendriks I.A."/>
            <person name="D'Souza R.C."/>
            <person name="Yang B."/>
            <person name="Verlaan-de Vries M."/>
            <person name="Mann M."/>
            <person name="Vertegaal A.C."/>
        </authorList>
    </citation>
    <scope>SUMOYLATION [LARGE SCALE ANALYSIS] AT LYS-113</scope>
    <scope>IDENTIFICATION BY MASS SPECTROMETRY [LARGE SCALE ANALYSIS]</scope>
</reference>
<reference key="33">
    <citation type="journal article" date="2014" name="PLoS ONE">
        <title>Sustained induction of collagen synthesis by TGF-beta requires regulated intramembrane proteolysis of CREB3L1.</title>
        <authorList>
            <person name="Chen Q."/>
            <person name="Lee C.E."/>
            <person name="Denard B."/>
            <person name="Ye J."/>
        </authorList>
    </citation>
    <scope>INTERACTION WITH CREB3L1</scope>
</reference>
<reference key="34">
    <citation type="journal article" date="2015" name="Biochim. Biophys. Acta">
        <title>Pokemon (FBI-1) interacts with Smad4 to repress TGF-beta-induced transcriptional responses.</title>
        <authorList>
            <person name="Yang Y."/>
            <person name="Cui J."/>
            <person name="Xue F."/>
            <person name="Zhang C."/>
            <person name="Mei Z."/>
            <person name="Wang Y."/>
            <person name="Bi M."/>
            <person name="Shan D."/>
            <person name="Meredith A."/>
            <person name="Li H."/>
            <person name="Xu Z.Q."/>
        </authorList>
    </citation>
    <scope>FUNCTION</scope>
    <scope>INTERACTION WITH CREBBP; EP300; HDAC1 AND ZBTB7A</scope>
    <scope>REGION</scope>
</reference>
<reference key="35">
    <citation type="journal article" date="2015" name="Mol. Cell. Proteomics">
        <title>System-wide analysis of SUMOylation dynamics in response to replication stress reveals novel small ubiquitin-like modified target proteins and acceptor lysines relevant for genome stability.</title>
        <authorList>
            <person name="Xiao Z."/>
            <person name="Chang J.G."/>
            <person name="Hendriks I.A."/>
            <person name="Sigurdsson J.O."/>
            <person name="Olsen J.V."/>
            <person name="Vertegaal A.C."/>
        </authorList>
    </citation>
    <scope>SUMOYLATION [LARGE SCALE ANALYSIS] AT LYS-113</scope>
    <scope>IDENTIFICATION BY MASS SPECTROMETRY [LARGE SCALE ANALYSIS]</scope>
</reference>
<reference key="36">
    <citation type="journal article" date="2016" name="Nat. Genet.">
        <title>Mutations in nuclear pore genes NUP93, NUP205 and XPO5 cause steroid-resistant nephrotic syndrome.</title>
        <authorList>
            <person name="Braun D.A."/>
            <person name="Sadowski C.E."/>
            <person name="Kohl S."/>
            <person name="Lovric S."/>
            <person name="Astrinidis S.A."/>
            <person name="Pabst W.L."/>
            <person name="Gee H.Y."/>
            <person name="Ashraf S."/>
            <person name="Lawson J.A."/>
            <person name="Shril S."/>
            <person name="Airik M."/>
            <person name="Tan W."/>
            <person name="Schapiro D."/>
            <person name="Rao J."/>
            <person name="Choi W.I."/>
            <person name="Hermle T."/>
            <person name="Kemper M.J."/>
            <person name="Pohl M."/>
            <person name="Ozaltin F."/>
            <person name="Konrad M."/>
            <person name="Bogdanovic R."/>
            <person name="Buescher R."/>
            <person name="Helmchen U."/>
            <person name="Serdaroglu E."/>
            <person name="Lifton R.P."/>
            <person name="Antonin W."/>
            <person name="Hildebrandt F."/>
        </authorList>
    </citation>
    <scope>INTERACTION WITH NUP93 AND IPO7</scope>
</reference>
<reference key="37">
    <citation type="journal article" date="2017" name="Nat. Struct. Mol. Biol.">
        <title>Site-specific mapping of the human SUMO proteome reveals co-modification with phosphorylation.</title>
        <authorList>
            <person name="Hendriks I.A."/>
            <person name="Lyon D."/>
            <person name="Young C."/>
            <person name="Jensen L.J."/>
            <person name="Vertegaal A.C."/>
            <person name="Nielsen M.L."/>
        </authorList>
    </citation>
    <scope>SUMOYLATION [LARGE SCALE ANALYSIS] AT LYS-113</scope>
    <scope>IDENTIFICATION BY MASS SPECTROMETRY [LARGE SCALE ANALYSIS]</scope>
</reference>
<reference key="38">
    <citation type="journal article" date="1997" name="Nature">
        <title>A structural basis for mutational inactivation of the tumour suppressor Smad4.</title>
        <authorList>
            <person name="Shi Y."/>
            <person name="Hata A."/>
            <person name="Lo R.S."/>
            <person name="Massague J."/>
            <person name="Pavletich N.P."/>
        </authorList>
    </citation>
    <scope>X-RAY CRYSTALLOGRAPHY (2.1 ANGSTROMS) OF 319-543</scope>
</reference>
<reference key="39">
    <citation type="journal article" date="1999" name="Structure">
        <title>Crystal structure of a transcriptionally active Smad4 fragment.</title>
        <authorList>
            <person name="Qin B."/>
            <person name="Lam S.S."/>
            <person name="Lin K."/>
        </authorList>
    </citation>
    <scope>X-RAY CRYSTALLOGRAPHY (2.6 ANGSTROMS) OF 285-552</scope>
</reference>
<reference key="40">
    <citation type="journal article" date="2001" name="Nat. Struct. Biol.">
        <title>The L3 loop and C-terminal phosphorylation jointly define Smad protein trimerization.</title>
        <authorList>
            <person name="Chacko B.M."/>
            <person name="Qin B."/>
            <person name="Correia J.J."/>
            <person name="Lam S.S."/>
            <person name="de Caestecker M.P."/>
            <person name="Lin K."/>
        </authorList>
    </citation>
    <scope>X-RAY CRYSTALLOGRAPHY (3 ANGSTROMS) OF 273-552 OF WILD TYPE AND MUTANTS ARG-416; ARG-502 AND ARG-515 IN COMPLEX WITH SMAD3</scope>
    <scope>SUBUNIT</scope>
    <scope>MUTAGENESIS OF ARG-416; ARG-496; ARG-502 AND ARG-515</scope>
</reference>
<reference key="41">
    <citation type="journal article" date="2004" name="Mol. Cell">
        <title>Structural basis of heteromeric smad protein assembly in TGF-beta signaling.</title>
        <authorList>
            <person name="Chacko B.M."/>
            <person name="Qin B.Y."/>
            <person name="Tiwari A."/>
            <person name="Shi G."/>
            <person name="Lam S."/>
            <person name="Hayward L.J."/>
            <person name="De Caestecker M."/>
            <person name="Lin K."/>
        </authorList>
    </citation>
    <scope>X-RAY CRYSTALLOGRAPHY (2.6 ANGSTROMS) OF 314-552 IN COMPLEX WITH SMAD2 OR SMAD3</scope>
    <scope>SUBUNIT</scope>
</reference>
<reference key="42">
    <citation type="journal article" date="1998" name="Hum. Mol. Genet.">
        <title>Mutations in DPC4 (SMAD4) cause juvenile polyposis syndrome, but only account for a minority of cases.</title>
        <authorList>
            <person name="Houlston R."/>
            <person name="Bevan S."/>
            <person name="Williams A."/>
            <person name="Young J."/>
            <person name="Dunlop M."/>
            <person name="Rozen P."/>
            <person name="Eng C."/>
            <person name="Markie D."/>
            <person name="Woodford-Richens K."/>
            <person name="Rodriguez-Bigas M.A."/>
            <person name="Leggett B."/>
            <person name="Neale K."/>
            <person name="Phillips R."/>
            <person name="Sheridan E."/>
            <person name="Hodgson S."/>
            <person name="Iwama T."/>
            <person name="Eccles D."/>
            <person name="Bodmer W."/>
            <person name="Tomlinson I."/>
        </authorList>
    </citation>
    <scope>VARIANT JPS CYS-361</scope>
</reference>
<reference key="43">
    <citation type="journal article" date="2002" name="Ann. Surg. Oncol.">
        <title>Germline SMAD4 or BMPR1A mutations and phenotype of juvenile polyposis.</title>
        <authorList>
            <person name="Sayed M.G."/>
            <person name="Ahmed A.F."/>
            <person name="Ringold J.R."/>
            <person name="Anderson M.E."/>
            <person name="Bair J.L."/>
            <person name="Mitros F.A."/>
            <person name="Lynch H.T."/>
            <person name="Tinley S.T."/>
            <person name="Petersen G.M."/>
            <person name="Giardiello F.M."/>
            <person name="Vogelstein B."/>
            <person name="Howe J.R."/>
        </authorList>
    </citation>
    <scope>VARIANTS JPS GLY-330 AND ARG-352</scope>
</reference>
<reference key="44">
    <citation type="journal article" date="2004" name="Lancet">
        <title>A combined syndrome of juvenile polyposis and hereditary haemorrhagic telangiectasia associated with mutations in MADH4 (SMAD4).</title>
        <authorList>
            <person name="Gallione C.J."/>
            <person name="Repetto G.M."/>
            <person name="Legius E."/>
            <person name="Rustgi A.K."/>
            <person name="Schelley S.L."/>
            <person name="Tejpar S."/>
            <person name="Mitchell G."/>
            <person name="Drouin E."/>
            <person name="Westermann C.J.J."/>
            <person name="Marchuk D.A."/>
        </authorList>
    </citation>
    <scope>VARIANTS JP/HHT ARG-352 AND ASP-386</scope>
</reference>
<reference key="45">
    <citation type="journal article" date="2006" name="Science">
        <title>The consensus coding sequences of human breast and colorectal cancers.</title>
        <authorList>
            <person name="Sjoeblom T."/>
            <person name="Jones S."/>
            <person name="Wood L.D."/>
            <person name="Parsons D.W."/>
            <person name="Lin J."/>
            <person name="Barber T.D."/>
            <person name="Mandelker D."/>
            <person name="Leary R.J."/>
            <person name="Ptak J."/>
            <person name="Silliman N."/>
            <person name="Szabo S."/>
            <person name="Buckhaults P."/>
            <person name="Farrell C."/>
            <person name="Meeh P."/>
            <person name="Markowitz S.D."/>
            <person name="Willis J."/>
            <person name="Dawson D."/>
            <person name="Willson J.K.V."/>
            <person name="Gazdar A.F."/>
            <person name="Hartigan J."/>
            <person name="Wu L."/>
            <person name="Liu C."/>
            <person name="Parmigiani G."/>
            <person name="Park B.H."/>
            <person name="Bachman K.E."/>
            <person name="Papadopoulos N."/>
            <person name="Vogelstein B."/>
            <person name="Kinzler K.W."/>
            <person name="Velculescu V.E."/>
        </authorList>
    </citation>
    <scope>VARIANTS [LARGE SCALE ANALYSIS] SER-130; ASN-351 AND HIS-361</scope>
    <scope>INVOLVEMENT IN COLORECTAL CANCER</scope>
</reference>
<reference key="46">
    <citation type="journal article" date="2012" name="Am. J. Hum. Genet.">
        <title>A restricted spectrum of mutations in the SMAD4 tumor-suppressor gene underlies Myhre syndrome.</title>
        <authorList>
            <person name="Caputo V."/>
            <person name="Cianetti L."/>
            <person name="Niceta M."/>
            <person name="Carta C."/>
            <person name="Ciolfi A."/>
            <person name="Bocchinfuso G."/>
            <person name="Carrani E."/>
            <person name="Dentici M.L."/>
            <person name="Biamino E."/>
            <person name="Belligni E."/>
            <person name="Garavelli L."/>
            <person name="Boccone L."/>
            <person name="Melis D."/>
            <person name="Andria G."/>
            <person name="Gelb B.D."/>
            <person name="Stella L."/>
            <person name="Silengo M."/>
            <person name="Dallapiccola B."/>
            <person name="Tartaglia M."/>
        </authorList>
    </citation>
    <scope>VARIANTS MYHRS THR-500 AND VAL-500</scope>
</reference>
<reference key="47">
    <citation type="journal article" date="2012" name="Nat. Genet.">
        <title>Mutations at a single codon in Mad homology 2 domain of SMAD4 cause Myhre syndrome.</title>
        <authorList>
            <person name="Le Goff C."/>
            <person name="Mahaut C."/>
            <person name="Abhyankar A."/>
            <person name="Le Goff W."/>
            <person name="Serre V."/>
            <person name="Afenjar A."/>
            <person name="Destree A."/>
            <person name="di Rocco M."/>
            <person name="Heron D."/>
            <person name="Jacquemont S."/>
            <person name="Marlin S."/>
            <person name="Simon M."/>
            <person name="Tolmie J."/>
            <person name="Verloes A."/>
            <person name="Casanova J.L."/>
            <person name="Munnich A."/>
            <person name="Cormier-Daire V."/>
        </authorList>
    </citation>
    <scope>VARIANTS MYHRS MET-500; THR-500 AND VAL-500</scope>
    <scope>CHARACTERIZATION OF VARIANT MYHRS THR-500</scope>
</reference>